<organism>
    <name type="scientific">Chikungunya virus (strain S27-African prototype)</name>
    <name type="common">CHIKV</name>
    <dbReference type="NCBI Taxonomy" id="371094"/>
    <lineage>
        <taxon>Viruses</taxon>
        <taxon>Riboviria</taxon>
        <taxon>Orthornavirae</taxon>
        <taxon>Kitrinoviricota</taxon>
        <taxon>Alsuviricetes</taxon>
        <taxon>Martellivirales</taxon>
        <taxon>Togaviridae</taxon>
        <taxon>Alphavirus</taxon>
        <taxon>Chikungunya virus</taxon>
    </lineage>
</organism>
<protein>
    <recommendedName>
        <fullName>Polyprotein P1234</fullName>
        <shortName>P1234</shortName>
    </recommendedName>
    <alternativeName>
        <fullName>Non-structural polyprotein</fullName>
    </alternativeName>
    <component>
        <recommendedName>
            <fullName>Polyprotein P123</fullName>
            <shortName>P123</shortName>
        </recommendedName>
    </component>
    <component>
        <recommendedName>
            <fullName>mRNA-capping enzyme nsP1</fullName>
            <ecNumber evidence="3">2.1.1.-</ecNumber>
            <ecNumber evidence="3">2.7.7.-</ecNumber>
        </recommendedName>
        <alternativeName>
            <fullName>Non-structural protein 1</fullName>
        </alternativeName>
    </component>
    <component>
        <recommendedName>
            <fullName>Protease nsP2</fullName>
            <ecNumber evidence="17 20">3.4.22.-</ecNumber>
            <ecNumber evidence="11 14">3.6.1.15</ecNumber>
            <ecNumber evidence="11">3.6.1.74</ecNumber>
            <ecNumber evidence="11 14">3.6.4.13</ecNumber>
        </recommendedName>
        <alternativeName>
            <fullName>Non-structural protein 2</fullName>
            <shortName>nsP2</shortName>
        </alternativeName>
    </component>
    <component>
        <recommendedName>
            <fullName>Non-structural protein 3</fullName>
            <shortName>nsP3</shortName>
            <ecNumber evidence="10">3.1.3.84</ecNumber>
        </recommendedName>
    </component>
    <component>
        <recommendedName>
            <fullName>RNA-directed RNA polymerase nsP4</fullName>
            <ecNumber evidence="1">2.7.7.19</ecNumber>
            <ecNumber evidence="5">2.7.7.48</ecNumber>
        </recommendedName>
        <alternativeName>
            <fullName>Non-structural protein 4</fullName>
            <shortName>nsP4</shortName>
        </alternativeName>
    </component>
</protein>
<organismHost>
    <name type="scientific">Aedes aegypti</name>
    <name type="common">Yellowfever mosquito</name>
    <name type="synonym">Culex aegypti</name>
    <dbReference type="NCBI Taxonomy" id="7159"/>
</organismHost>
<organismHost>
    <name type="scientific">Aedes albopictus</name>
    <name type="common">Asian tiger mosquito</name>
    <name type="synonym">Stegomyia albopicta</name>
    <dbReference type="NCBI Taxonomy" id="7160"/>
</organismHost>
<organismHost>
    <name type="scientific">Aedes furcifer</name>
    <name type="common">Mosquito</name>
    <dbReference type="NCBI Taxonomy" id="299627"/>
</organismHost>
<organismHost>
    <name type="scientific">Aedes polynesiensis</name>
    <name type="common">Polynesian tiger mosquito</name>
    <dbReference type="NCBI Taxonomy" id="188700"/>
</organismHost>
<organismHost>
    <name type="scientific">Cercopithecus</name>
    <dbReference type="NCBI Taxonomy" id="9533"/>
</organismHost>
<organismHost>
    <name type="scientific">Homo sapiens</name>
    <name type="common">Human</name>
    <dbReference type="NCBI Taxonomy" id="9606"/>
</organismHost>
<organismHost>
    <name type="scientific">Macaca</name>
    <name type="common">macaques</name>
    <dbReference type="NCBI Taxonomy" id="9539"/>
</organismHost>
<organismHost>
    <name type="scientific">Pan troglodytes</name>
    <name type="common">Chimpanzee</name>
    <dbReference type="NCBI Taxonomy" id="9598"/>
</organismHost>
<organismHost>
    <name type="scientific">Papio</name>
    <name type="common">baboons</name>
    <dbReference type="NCBI Taxonomy" id="9554"/>
</organismHost>
<organismHost>
    <name type="scientific">Presbytis</name>
    <dbReference type="NCBI Taxonomy" id="9573"/>
</organismHost>
<feature type="chain" id="PRO_0000308395" description="Polyprotein P1234">
    <location>
        <begin position="1"/>
        <end position="2474"/>
    </location>
</feature>
<feature type="chain" id="PRO_0000227760" description="Polyprotein P123">
    <location>
        <begin position="1"/>
        <end position="1863"/>
    </location>
</feature>
<feature type="chain" id="PRO_0000227761" description="mRNA-capping enzyme nsP1">
    <location>
        <begin position="1"/>
        <end position="535"/>
    </location>
</feature>
<feature type="chain" id="PRO_0000227762" description="Protease nsP2">
    <location>
        <begin position="536"/>
        <end position="1333"/>
    </location>
</feature>
<feature type="chain" id="PRO_0000227763" description="Non-structural protein 3">
    <location>
        <begin position="1334"/>
        <end position="1863"/>
    </location>
</feature>
<feature type="chain" id="PRO_0000227764" description="RNA-directed RNA polymerase nsP4">
    <location>
        <begin position="1864"/>
        <end position="2474"/>
    </location>
</feature>
<feature type="domain" description="Alphavirus-like MT" evidence="8">
    <location>
        <begin position="28"/>
        <end position="259"/>
    </location>
</feature>
<feature type="domain" description="(+)RNA virus helicase ATP-binding" evidence="7">
    <location>
        <begin position="690"/>
        <end position="842"/>
    </location>
</feature>
<feature type="domain" description="(+)RNA virus helicase C-terminal" evidence="7">
    <location>
        <begin position="843"/>
        <end position="991"/>
    </location>
</feature>
<feature type="domain" description="Peptidase C9" evidence="6">
    <location>
        <begin position="1004"/>
        <end position="1327"/>
    </location>
</feature>
<feature type="domain" description="Macro" evidence="4">
    <location>
        <begin position="1334"/>
        <end position="1493"/>
    </location>
</feature>
<feature type="domain" description="RdRp catalytic" evidence="5">
    <location>
        <begin position="2228"/>
        <end position="2343"/>
    </location>
</feature>
<feature type="region of interest" description="Membrane-binding and oligomerization" evidence="33">
    <location>
        <begin position="295"/>
        <end position="450"/>
    </location>
</feature>
<feature type="region of interest" description="Disordered" evidence="9">
    <location>
        <begin position="482"/>
        <end position="502"/>
    </location>
</feature>
<feature type="region of interest" description="Nucleolus localization signal" evidence="2">
    <location>
        <begin position="1005"/>
        <end position="1024"/>
    </location>
</feature>
<feature type="region of interest" description="Disordered" evidence="9">
    <location>
        <begin position="1651"/>
        <end position="1672"/>
    </location>
</feature>
<feature type="region of interest" description="HVD" evidence="29">
    <location>
        <begin position="1659"/>
        <end position="1857"/>
    </location>
</feature>
<feature type="region of interest" description="Interaction with host CD2AP" evidence="29">
    <location>
        <begin position="1726"/>
        <end position="1739"/>
    </location>
</feature>
<feature type="region of interest" description="Interaction with host FHL1" evidence="31">
    <location>
        <begin position="1745"/>
        <end position="1793"/>
    </location>
</feature>
<feature type="region of interest" description="Interaction with host CD2AP" evidence="29">
    <location>
        <begin position="1756"/>
        <end position="1767"/>
    </location>
</feature>
<feature type="region of interest" description="Interaction with host CD2AP" evidence="29">
    <location>
        <begin position="1820"/>
        <end position="1828"/>
    </location>
</feature>
<feature type="short sequence motif" description="Nuclear export signal" evidence="3">
    <location>
        <begin position="1058"/>
        <end position="1067"/>
    </location>
</feature>
<feature type="short sequence motif" description="Nuclear localization signal" evidence="2">
    <location>
        <begin position="1182"/>
        <end position="1186"/>
    </location>
</feature>
<feature type="short sequence motif" description="FGDF; binding to host G3BP1" evidence="38">
    <location>
        <begin position="1812"/>
        <end position="1815"/>
    </location>
</feature>
<feature type="short sequence motif" description="FGDF; binding to host G3BP1" evidence="38">
    <location>
        <begin position="1830"/>
        <end position="1833"/>
    </location>
</feature>
<feature type="compositionally biased region" description="Polar residues" evidence="9">
    <location>
        <begin position="1660"/>
        <end position="1672"/>
    </location>
</feature>
<feature type="active site" description="For mRNA-capping enzyme nsP1 activity" evidence="34">
    <location>
        <position position="37"/>
    </location>
</feature>
<feature type="active site" description="For cysteine protease nsP2 activity" evidence="6">
    <location>
        <position position="1013"/>
    </location>
</feature>
<feature type="active site" description="For cysteine protease nsP2 activity" evidence="6">
    <location>
        <position position="1083"/>
    </location>
</feature>
<feature type="binding site" evidence="34">
    <location>
        <position position="79"/>
    </location>
    <ligand>
        <name>Zn(2+)</name>
        <dbReference type="ChEBI" id="CHEBI:29105"/>
    </ligand>
</feature>
<feature type="binding site" evidence="34">
    <location>
        <position position="129"/>
    </location>
    <ligand>
        <name>Zn(2+)</name>
        <dbReference type="ChEBI" id="CHEBI:29105"/>
    </ligand>
</feature>
<feature type="binding site" evidence="34">
    <location>
        <position position="134"/>
    </location>
    <ligand>
        <name>Zn(2+)</name>
        <dbReference type="ChEBI" id="CHEBI:29105"/>
    </ligand>
</feature>
<feature type="binding site" evidence="34">
    <location>
        <position position="141"/>
    </location>
    <ligand>
        <name>Zn(2+)</name>
        <dbReference type="ChEBI" id="CHEBI:29105"/>
    </ligand>
</feature>
<feature type="binding site" evidence="7">
    <location>
        <begin position="721"/>
        <end position="728"/>
    </location>
    <ligand>
        <name>a ribonucleoside 5'-triphosphate</name>
        <dbReference type="ChEBI" id="CHEBI:61557"/>
    </ligand>
</feature>
<feature type="binding site" evidence="10">
    <location>
        <position position="1343"/>
    </location>
    <ligand>
        <name>ADP-D-ribose</name>
        <dbReference type="ChEBI" id="CHEBI:57967"/>
    </ligand>
</feature>
<feature type="binding site" evidence="10">
    <location>
        <position position="1357"/>
    </location>
    <ligand>
        <name>ADP-D-ribose</name>
        <dbReference type="ChEBI" id="CHEBI:57967"/>
    </ligand>
</feature>
<feature type="binding site" evidence="10">
    <location>
        <position position="1365"/>
    </location>
    <ligand>
        <name>ADP-D-ribose</name>
        <dbReference type="ChEBI" id="CHEBI:57967"/>
    </ligand>
</feature>
<feature type="binding site" evidence="10">
    <location>
        <position position="1445"/>
    </location>
    <ligand>
        <name>ADP-D-ribose</name>
        <dbReference type="ChEBI" id="CHEBI:57967"/>
    </ligand>
</feature>
<feature type="binding site" evidence="10">
    <location>
        <position position="1446"/>
    </location>
    <ligand>
        <name>ADP-D-ribose</name>
        <dbReference type="ChEBI" id="CHEBI:57967"/>
    </ligand>
</feature>
<feature type="binding site" evidence="10">
    <location>
        <position position="1447"/>
    </location>
    <ligand>
        <name>ADP-D-ribose</name>
        <dbReference type="ChEBI" id="CHEBI:57967"/>
    </ligand>
</feature>
<feature type="binding site" evidence="1">
    <location>
        <position position="1595"/>
    </location>
    <ligand>
        <name>Zn(2+)</name>
        <dbReference type="ChEBI" id="CHEBI:29105"/>
    </ligand>
</feature>
<feature type="binding site" evidence="1">
    <location>
        <position position="1597"/>
    </location>
    <ligand>
        <name>Zn(2+)</name>
        <dbReference type="ChEBI" id="CHEBI:29105"/>
    </ligand>
</feature>
<feature type="binding site" evidence="1">
    <location>
        <position position="1620"/>
    </location>
    <ligand>
        <name>Zn(2+)</name>
        <dbReference type="ChEBI" id="CHEBI:29105"/>
    </ligand>
</feature>
<feature type="binding site" evidence="1">
    <location>
        <position position="1638"/>
    </location>
    <ligand>
        <name>Zn(2+)</name>
        <dbReference type="ChEBI" id="CHEBI:29105"/>
    </ligand>
</feature>
<feature type="site" description="Involved in the phosphoramide link with 7-methyl-GMP" evidence="3">
    <location>
        <position position="37"/>
    </location>
</feature>
<feature type="site" description="Cleavage; by protease nsP2" evidence="1">
    <location>
        <begin position="535"/>
        <end position="536"/>
    </location>
</feature>
<feature type="site" description="Cleavage; by protease nsP2" evidence="1">
    <location>
        <begin position="1333"/>
        <end position="1334"/>
    </location>
</feature>
<feature type="site" description="Cleavage; by protease nsP2" evidence="20">
    <location>
        <begin position="1863"/>
        <end position="1864"/>
    </location>
</feature>
<feature type="lipid moiety-binding region" description="S-palmitoyl cysteine; by host" evidence="41">
    <location>
        <position position="417"/>
    </location>
</feature>
<feature type="lipid moiety-binding region" description="S-palmitoyl cysteine; by host" evidence="41">
    <location>
        <position position="419"/>
    </location>
</feature>
<feature type="mutagenesis site" description="Loss of palmitoylation." evidence="26">
    <original>C</original>
    <variation>A</variation>
    <location>
        <position position="417"/>
    </location>
</feature>
<feature type="mutagenesis site" description="Loss of palmitoylation." evidence="26">
    <original>C</original>
    <variation>A</variation>
    <location>
        <position position="419"/>
    </location>
</feature>
<feature type="mutagenesis site" description="5 fold reduction of NTPase activity and 50% loss of RTPase activity." evidence="11">
    <original>K</original>
    <variation>A</variation>
    <location>
        <position position="727"/>
    </location>
</feature>
<feature type="mutagenesis site" description="5 fold reduction of NTPase activity and 50% loss of RTPase activity." evidence="11">
    <original>DE</original>
    <variation>AA</variation>
    <location>
        <begin position="787"/>
        <end position="788"/>
    </location>
</feature>
<feature type="mutagenesis site" description="Complete loss of nsP2 protease activity; when associated with A-1017." evidence="17 20">
    <original>C</original>
    <variation>A</variation>
    <location>
        <position position="1013"/>
    </location>
</feature>
<feature type="mutagenesis site" description="Complete loss of nsP2 protease activity." evidence="20">
    <original>W</original>
    <variation>A</variation>
    <location>
        <position position="1014"/>
    </location>
</feature>
<feature type="mutagenesis site" description="Complete loss of nsP2 protease activity; when associated with A-1013." evidence="17 20">
    <original>S</original>
    <variation>A</variation>
    <location>
        <position position="1017"/>
    </location>
</feature>
<feature type="mutagenesis site" description="Increased nsP2 protease activity." evidence="17">
    <original>W</original>
    <variation>A</variation>
    <location>
        <position position="1084"/>
    </location>
</feature>
<feature type="mutagenesis site" description="Decreased nsP2 protease activity." evidence="17">
    <original>W</original>
    <variation>F</variation>
    <location>
        <position position="1084"/>
    </location>
</feature>
<feature type="mutagenesis site" description="Complete loss of nuclear localization and inhibition of JAK/STAT signaling." evidence="25">
    <original>KR</original>
    <variation>AA</variation>
    <location>
        <begin position="1184"/>
        <end position="1185"/>
    </location>
</feature>
<feature type="mutagenesis site" description="Complete loss of host transcription shutoff, still able to localize in the nucleus and inhibit JAK/STAT signaling." evidence="25">
    <original>P</original>
    <variation>A</variation>
    <location>
        <position position="1253"/>
    </location>
</feature>
<feature type="mutagenesis site" description="Partial loss of ADP-ribose 1'' phosphate phosphatase activity." evidence="10">
    <original>D</original>
    <variation>A</variation>
    <location>
        <position position="1343"/>
    </location>
</feature>
<feature type="mutagenesis site" description="Partial loss of mono-ADP-ribosylhydrolase activity; complete loss of ADP-ribose 1'' phosphate phosphatase activity." evidence="10 22">
    <original>N</original>
    <variation>A</variation>
    <location>
        <position position="1357"/>
    </location>
</feature>
<feature type="mutagenesis site" description="Almost complete loss of mono-ADP-ribosylhydrolase activity." evidence="22">
    <original>N</original>
    <variation>R</variation>
    <variation>Y</variation>
    <location>
        <position position="1357"/>
    </location>
</feature>
<feature type="mutagenesis site" description="Partial loss of mono-ADP-ribosylhydrolase activity." evidence="22">
    <original>V</original>
    <variation>A</variation>
    <location>
        <position position="1366"/>
    </location>
</feature>
<feature type="mutagenesis site" description="Almost complete loss of mono-ADP-ribosylhydrolase activity." evidence="22">
    <original>V</original>
    <variation>E</variation>
    <variation>F</variation>
    <location>
        <position position="1366"/>
    </location>
</feature>
<feature type="mutagenesis site" description="Partial loss of mono-ADP-ribosylhydrolase activity; complete loss of ADP-ribose 1'' phosphate phosphatase activity." evidence="10 22">
    <original>Y</original>
    <variation>A</variation>
    <location>
        <position position="1447"/>
    </location>
</feature>
<feature type="mutagenesis site" description="Almost complete loss of mono-ADP-ribosylhydrolase activity." evidence="22">
    <original>Y</original>
    <variation>V</variation>
    <variation>W</variation>
    <location>
        <position position="1447"/>
    </location>
</feature>
<feature type="mutagenesis site" description="Complete loss of replication." evidence="28">
    <original>VP</original>
    <variation>AA</variation>
    <location>
        <begin position="1593"/>
        <end position="1594"/>
    </location>
</feature>
<feature type="mutagenesis site" description="Complete loss of replication." evidence="28">
    <original>CLC</original>
    <variation>ALA</variation>
    <location>
        <begin position="1595"/>
        <end position="1597"/>
    </location>
</feature>
<feature type="mutagenesis site" description="Complete loss of binding to host G3BP1; when associated with A-1830." evidence="18">
    <original>F</original>
    <variation>A</variation>
    <location>
        <position position="1812"/>
    </location>
</feature>
<feature type="mutagenesis site" description="Complete loss of binding to host G3BP1; when associated with A-1812." evidence="18">
    <original>F</original>
    <variation>A</variation>
    <location>
        <position position="1830"/>
    </location>
</feature>
<feature type="strand" evidence="51">
    <location>
        <begin position="4"/>
        <end position="6"/>
    </location>
</feature>
<feature type="strand" evidence="49">
    <location>
        <begin position="10"/>
        <end position="12"/>
    </location>
</feature>
<feature type="helix" evidence="51">
    <location>
        <begin position="14"/>
        <end position="21"/>
    </location>
</feature>
<feature type="strand" evidence="51">
    <location>
        <begin position="27"/>
        <end position="29"/>
    </location>
</feature>
<feature type="strand" evidence="55">
    <location>
        <begin position="35"/>
        <end position="37"/>
    </location>
</feature>
<feature type="helix" evidence="51">
    <location>
        <begin position="38"/>
        <end position="54"/>
    </location>
</feature>
<feature type="strand" evidence="51">
    <location>
        <begin position="60"/>
        <end position="64"/>
    </location>
</feature>
<feature type="helix" evidence="51">
    <location>
        <begin position="68"/>
        <end position="71"/>
    </location>
</feature>
<feature type="strand" evidence="51">
    <location>
        <begin position="75"/>
        <end position="81"/>
    </location>
</feature>
<feature type="strand" evidence="55">
    <location>
        <begin position="86"/>
        <end position="88"/>
    </location>
</feature>
<feature type="helix" evidence="51">
    <location>
        <begin position="89"/>
        <end position="102"/>
    </location>
</feature>
<feature type="strand" evidence="51">
    <location>
        <begin position="103"/>
        <end position="106"/>
    </location>
</feature>
<feature type="strand" evidence="49">
    <location>
        <begin position="108"/>
        <end position="110"/>
    </location>
</feature>
<feature type="helix" evidence="51">
    <location>
        <begin position="112"/>
        <end position="124"/>
    </location>
</feature>
<feature type="strand" evidence="50">
    <location>
        <begin position="131"/>
        <end position="134"/>
    </location>
</feature>
<feature type="turn" evidence="51">
    <location>
        <begin position="138"/>
        <end position="140"/>
    </location>
</feature>
<feature type="strand" evidence="51">
    <location>
        <begin position="146"/>
        <end position="152"/>
    </location>
</feature>
<feature type="helix" evidence="51">
    <location>
        <begin position="158"/>
        <end position="166"/>
    </location>
</feature>
<feature type="turn" evidence="51">
    <location>
        <begin position="167"/>
        <end position="169"/>
    </location>
</feature>
<feature type="strand" evidence="51">
    <location>
        <begin position="172"/>
        <end position="178"/>
    </location>
</feature>
<feature type="helix" evidence="51">
    <location>
        <begin position="181"/>
        <end position="184"/>
    </location>
</feature>
<feature type="strand" evidence="51">
    <location>
        <begin position="188"/>
        <end position="192"/>
    </location>
</feature>
<feature type="helix" evidence="51">
    <location>
        <begin position="193"/>
        <end position="195"/>
    </location>
</feature>
<feature type="strand" evidence="51">
    <location>
        <begin position="197"/>
        <end position="201"/>
    </location>
</feature>
<feature type="helix" evidence="51">
    <location>
        <begin position="202"/>
        <end position="204"/>
    </location>
</feature>
<feature type="strand" evidence="51">
    <location>
        <begin position="208"/>
        <end position="212"/>
    </location>
</feature>
<feature type="strand" evidence="54">
    <location>
        <begin position="225"/>
        <end position="228"/>
    </location>
</feature>
<feature type="strand" evidence="51">
    <location>
        <begin position="237"/>
        <end position="243"/>
    </location>
</feature>
<feature type="strand" evidence="51">
    <location>
        <begin position="246"/>
        <end position="251"/>
    </location>
</feature>
<feature type="helix" evidence="51">
    <location>
        <begin position="252"/>
        <end position="256"/>
    </location>
</feature>
<feature type="strand" evidence="51">
    <location>
        <begin position="262"/>
        <end position="282"/>
    </location>
</feature>
<feature type="strand" evidence="51">
    <location>
        <begin position="285"/>
        <end position="295"/>
    </location>
</feature>
<feature type="strand" evidence="51">
    <location>
        <begin position="303"/>
        <end position="307"/>
    </location>
</feature>
<feature type="strand" evidence="51">
    <location>
        <begin position="309"/>
        <end position="321"/>
    </location>
</feature>
<feature type="strand" evidence="51">
    <location>
        <begin position="324"/>
        <end position="334"/>
    </location>
</feature>
<feature type="helix" evidence="51">
    <location>
        <begin position="336"/>
        <end position="341"/>
    </location>
</feature>
<feature type="turn" evidence="51">
    <location>
        <begin position="342"/>
        <end position="344"/>
    </location>
</feature>
<feature type="helix" evidence="51">
    <location>
        <begin position="345"/>
        <end position="347"/>
    </location>
</feature>
<feature type="helix" evidence="51">
    <location>
        <begin position="352"/>
        <end position="363"/>
    </location>
</feature>
<feature type="strand" evidence="50">
    <location>
        <begin position="377"/>
        <end position="379"/>
    </location>
</feature>
<feature type="helix" evidence="51">
    <location>
        <begin position="381"/>
        <end position="383"/>
    </location>
</feature>
<feature type="helix" evidence="51">
    <location>
        <begin position="384"/>
        <end position="402"/>
    </location>
</feature>
<feature type="strand" evidence="54">
    <location>
        <begin position="417"/>
        <end position="419"/>
    </location>
</feature>
<feature type="strand" evidence="49">
    <location>
        <begin position="421"/>
        <end position="423"/>
    </location>
</feature>
<feature type="strand" evidence="51">
    <location>
        <begin position="430"/>
        <end position="433"/>
    </location>
</feature>
<feature type="strand" evidence="51">
    <location>
        <begin position="438"/>
        <end position="442"/>
    </location>
</feature>
<feature type="helix" evidence="51">
    <location>
        <begin position="462"/>
        <end position="473"/>
    </location>
</feature>
<feature type="helix" evidence="48">
    <location>
        <begin position="1013"/>
        <end position="1024"/>
    </location>
</feature>
<feature type="helix" evidence="48">
    <location>
        <begin position="1031"/>
        <end position="1037"/>
    </location>
</feature>
<feature type="helix" evidence="48">
    <location>
        <begin position="1039"/>
        <end position="1042"/>
    </location>
</feature>
<feature type="helix" evidence="48">
    <location>
        <begin position="1049"/>
        <end position="1061"/>
    </location>
</feature>
<feature type="helix" evidence="48">
    <location>
        <begin position="1065"/>
        <end position="1067"/>
    </location>
</feature>
<feature type="strand" evidence="48">
    <location>
        <begin position="1075"/>
        <end position="1079"/>
    </location>
</feature>
<feature type="strand" evidence="48">
    <location>
        <begin position="1088"/>
        <end position="1094"/>
    </location>
</feature>
<feature type="helix" evidence="48">
    <location>
        <begin position="1097"/>
        <end position="1106"/>
    </location>
</feature>
<feature type="helix" evidence="48">
    <location>
        <begin position="1108"/>
        <end position="1110"/>
    </location>
</feature>
<feature type="strand" evidence="48">
    <location>
        <begin position="1119"/>
        <end position="1121"/>
    </location>
</feature>
<feature type="turn" evidence="48">
    <location>
        <begin position="1122"/>
        <end position="1125"/>
    </location>
</feature>
<feature type="strand" evidence="48">
    <location>
        <begin position="1126"/>
        <end position="1129"/>
    </location>
</feature>
<feature type="helix" evidence="48">
    <location>
        <begin position="1160"/>
        <end position="1163"/>
    </location>
</feature>
<feature type="strand" evidence="48">
    <location>
        <begin position="1169"/>
        <end position="1177"/>
    </location>
</feature>
<feature type="strand" evidence="48">
    <location>
        <begin position="1184"/>
        <end position="1191"/>
    </location>
</feature>
<feature type="strand" evidence="48">
    <location>
        <begin position="1198"/>
        <end position="1201"/>
    </location>
</feature>
<feature type="helix" evidence="48">
    <location>
        <begin position="1203"/>
        <end position="1205"/>
    </location>
</feature>
<feature type="helix" evidence="48">
    <location>
        <begin position="1209"/>
        <end position="1211"/>
    </location>
</feature>
<feature type="strand" evidence="48">
    <location>
        <begin position="1214"/>
        <end position="1220"/>
    </location>
</feature>
<feature type="helix" evidence="48">
    <location>
        <begin position="1229"/>
        <end position="1246"/>
    </location>
</feature>
<feature type="helix" evidence="48">
    <location>
        <begin position="1247"/>
        <end position="1250"/>
    </location>
</feature>
<feature type="strand" evidence="48">
    <location>
        <begin position="1251"/>
        <end position="1261"/>
    </location>
</feature>
<feature type="helix" evidence="48">
    <location>
        <begin position="1267"/>
        <end position="1277"/>
    </location>
</feature>
<feature type="strand" evidence="48">
    <location>
        <begin position="1280"/>
        <end position="1286"/>
    </location>
</feature>
<feature type="strand" evidence="48">
    <location>
        <begin position="1297"/>
        <end position="1304"/>
    </location>
</feature>
<feature type="helix" evidence="48">
    <location>
        <begin position="1314"/>
        <end position="1323"/>
    </location>
</feature>
<feature type="strand" evidence="53">
    <location>
        <begin position="1337"/>
        <end position="1342"/>
    </location>
</feature>
<feature type="helix" evidence="53">
    <location>
        <begin position="1344"/>
        <end position="1346"/>
    </location>
</feature>
<feature type="strand" evidence="53">
    <location>
        <begin position="1352"/>
        <end position="1355"/>
    </location>
</feature>
<feature type="helix" evidence="53">
    <location>
        <begin position="1366"/>
        <end position="1373"/>
    </location>
</feature>
<feature type="helix" evidence="53">
    <location>
        <begin position="1375"/>
        <end position="1378"/>
    </location>
</feature>
<feature type="strand" evidence="53">
    <location>
        <begin position="1388"/>
        <end position="1393"/>
    </location>
</feature>
<feature type="strand" evidence="53">
    <location>
        <begin position="1396"/>
        <end position="1401"/>
    </location>
</feature>
<feature type="turn" evidence="53">
    <location>
        <begin position="1406"/>
        <end position="1408"/>
    </location>
</feature>
<feature type="helix" evidence="53">
    <location>
        <begin position="1411"/>
        <end position="1432"/>
    </location>
</feature>
<feature type="strand" evidence="53">
    <location>
        <begin position="1435"/>
        <end position="1440"/>
    </location>
</feature>
<feature type="helix" evidence="52">
    <location>
        <begin position="1446"/>
        <end position="1448"/>
    </location>
</feature>
<feature type="helix" evidence="53">
    <location>
        <begin position="1454"/>
        <end position="1465"/>
    </location>
</feature>
<feature type="strand" evidence="53">
    <location>
        <begin position="1470"/>
        <end position="1476"/>
    </location>
</feature>
<feature type="helix" evidence="53">
    <location>
        <begin position="1479"/>
        <end position="1492"/>
    </location>
</feature>
<feature type="turn" evidence="56">
    <location>
        <begin position="1516"/>
        <end position="1519"/>
    </location>
</feature>
<feature type="strand" evidence="56">
    <location>
        <begin position="1523"/>
        <end position="1531"/>
    </location>
</feature>
<feature type="helix" evidence="56">
    <location>
        <begin position="1539"/>
        <end position="1552"/>
    </location>
</feature>
<feature type="helix" evidence="56">
    <location>
        <begin position="1556"/>
        <end position="1567"/>
    </location>
</feature>
<feature type="helix" evidence="56">
    <location>
        <begin position="1572"/>
        <end position="1578"/>
    </location>
</feature>
<feature type="strand" evidence="56">
    <location>
        <begin position="1594"/>
        <end position="1597"/>
    </location>
</feature>
<feature type="helix" evidence="56">
    <location>
        <begin position="1603"/>
        <end position="1612"/>
    </location>
</feature>
<feature type="strand" evidence="56">
    <location>
        <begin position="1617"/>
        <end position="1619"/>
    </location>
</feature>
<feature type="strand" evidence="56">
    <location>
        <begin position="1633"/>
        <end position="1636"/>
    </location>
</feature>
<feature type="strand" evidence="56">
    <location>
        <begin position="1639"/>
        <end position="1641"/>
    </location>
</feature>
<proteinExistence type="evidence at protein level"/>
<dbReference type="EC" id="2.1.1.-" evidence="3"/>
<dbReference type="EC" id="2.7.7.-" evidence="3"/>
<dbReference type="EC" id="3.4.22.-" evidence="17 20"/>
<dbReference type="EC" id="3.6.1.15" evidence="11 14"/>
<dbReference type="EC" id="3.6.1.74" evidence="11"/>
<dbReference type="EC" id="3.6.4.13" evidence="11 14"/>
<dbReference type="EC" id="3.1.3.84" evidence="10"/>
<dbReference type="EC" id="2.7.7.19" evidence="1"/>
<dbReference type="EC" id="2.7.7.48" evidence="5"/>
<dbReference type="EMBL" id="AF369024">
    <property type="protein sequence ID" value="AAN05101.1"/>
    <property type="molecule type" value="Genomic_RNA"/>
</dbReference>
<dbReference type="RefSeq" id="NP_690588.1">
    <property type="nucleotide sequence ID" value="NC_004162.2"/>
</dbReference>
<dbReference type="PDB" id="3GPG">
    <property type="method" value="X-ray"/>
    <property type="resolution" value="1.65 A"/>
    <property type="chains" value="A/B/C/D=1334-1493"/>
</dbReference>
<dbReference type="PDB" id="3GPO">
    <property type="method" value="X-ray"/>
    <property type="resolution" value="1.90 A"/>
    <property type="chains" value="A/B/C/D=1334-1493"/>
</dbReference>
<dbReference type="PDB" id="3GPQ">
    <property type="method" value="X-ray"/>
    <property type="resolution" value="2.00 A"/>
    <property type="chains" value="A/B/C/D=1334-1493"/>
</dbReference>
<dbReference type="PDB" id="3TRK">
    <property type="method" value="X-ray"/>
    <property type="resolution" value="2.40 A"/>
    <property type="chains" value="A=1006-1326"/>
</dbReference>
<dbReference type="PDB" id="4TU0">
    <property type="method" value="X-ray"/>
    <property type="resolution" value="2.30 A"/>
    <property type="chains" value="A/B/C/D=1334-1493"/>
</dbReference>
<dbReference type="PDB" id="5I22">
    <property type="method" value="NMR"/>
    <property type="chains" value="B=1728-1744"/>
</dbReference>
<dbReference type="PDB" id="6VUQ">
    <property type="method" value="X-ray"/>
    <property type="resolution" value="1.64 A"/>
    <property type="chains" value="A/B/C/D=1334-1493"/>
</dbReference>
<dbReference type="PDB" id="6W7H">
    <property type="method" value="X-ray"/>
    <property type="resolution" value="1.95 A"/>
    <property type="chains" value="A/B/C/D=1334-1493"/>
</dbReference>
<dbReference type="PDB" id="6W8K">
    <property type="method" value="X-ray"/>
    <property type="resolution" value="1.80 A"/>
    <property type="chains" value="A/B/C/D=1334-1493"/>
</dbReference>
<dbReference type="PDB" id="6W8M">
    <property type="method" value="X-ray"/>
    <property type="resolution" value="1.75 A"/>
    <property type="chains" value="A/B/C/D=1334-1493"/>
</dbReference>
<dbReference type="PDB" id="6W8Q">
    <property type="method" value="X-ray"/>
    <property type="resolution" value="2.34 A"/>
    <property type="chains" value="A/B/C/D=1334-1493"/>
</dbReference>
<dbReference type="PDB" id="6W8Y">
    <property type="method" value="X-ray"/>
    <property type="resolution" value="2.10 A"/>
    <property type="chains" value="A/B/C/D=1334-1493"/>
</dbReference>
<dbReference type="PDB" id="6W8Z">
    <property type="method" value="X-ray"/>
    <property type="resolution" value="1.90 A"/>
    <property type="chains" value="A/B/C/D=1334-1493"/>
</dbReference>
<dbReference type="PDB" id="6W91">
    <property type="method" value="X-ray"/>
    <property type="resolution" value="2.21 A"/>
    <property type="chains" value="A/B/C/D=1334-1493"/>
</dbReference>
<dbReference type="PDB" id="6Z0U">
    <property type="method" value="EM"/>
    <property type="resolution" value="2.90 A"/>
    <property type="chains" value="A/BA/C/DA/E/FA/G/HA/I/JA/K/LA/M/NA/O/PA/Q/RA/S/TA/V/VA/X/Z=1-472"/>
</dbReference>
<dbReference type="PDB" id="6Z0V">
    <property type="method" value="EM"/>
    <property type="resolution" value="2.60 A"/>
    <property type="chains" value="A/C/E/G/I/K/M/O/Q/S/V/X=1-472"/>
</dbReference>
<dbReference type="PDB" id="7DOP">
    <property type="method" value="EM"/>
    <property type="resolution" value="2.38 A"/>
    <property type="chains" value="A/B/C/D/E/F/G/H/I/J/K/L=1-516"/>
</dbReference>
<dbReference type="PDB" id="7FGG">
    <property type="method" value="EM"/>
    <property type="resolution" value="2.19 A"/>
    <property type="chains" value="A/B/C/D/E/F/G/H/I/J/K/L=1-516"/>
</dbReference>
<dbReference type="PDB" id="7FGH">
    <property type="method" value="EM"/>
    <property type="resolution" value="2.18 A"/>
    <property type="chains" value="A/B/C/D/E/F/G/H/I/J/K/L=1-516"/>
</dbReference>
<dbReference type="PDB" id="7FGI">
    <property type="method" value="EM"/>
    <property type="resolution" value="2.51 A"/>
    <property type="chains" value="A/B/C/D/E/F/G/H/I/J/K/L=1-516"/>
</dbReference>
<dbReference type="PDB" id="7H6J">
    <property type="method" value="X-ray"/>
    <property type="resolution" value="1.44 A"/>
    <property type="chains" value="A/B/C/D=1334-1493"/>
</dbReference>
<dbReference type="PDB" id="7H6K">
    <property type="method" value="X-ray"/>
    <property type="resolution" value="1.33 A"/>
    <property type="chains" value="A/B/C/D=1334-1493"/>
</dbReference>
<dbReference type="PDB" id="7H6L">
    <property type="method" value="X-ray"/>
    <property type="resolution" value="1.33 A"/>
    <property type="chains" value="A/B/C/D=1334-1493"/>
</dbReference>
<dbReference type="PDB" id="7H6M">
    <property type="method" value="X-ray"/>
    <property type="resolution" value="1.39 A"/>
    <property type="chains" value="A/B/C/D=1334-1493"/>
</dbReference>
<dbReference type="PDB" id="7H6N">
    <property type="method" value="X-ray"/>
    <property type="resolution" value="1.52 A"/>
    <property type="chains" value="A/B/C/D=1334-1493"/>
</dbReference>
<dbReference type="PDB" id="7H6O">
    <property type="method" value="X-ray"/>
    <property type="resolution" value="1.42 A"/>
    <property type="chains" value="A/B/C/D=1334-1493"/>
</dbReference>
<dbReference type="PDB" id="7H6P">
    <property type="method" value="X-ray"/>
    <property type="resolution" value="1.39 A"/>
    <property type="chains" value="A/B/C/D=1334-1493"/>
</dbReference>
<dbReference type="PDB" id="7H6Q">
    <property type="method" value="X-ray"/>
    <property type="resolution" value="1.35 A"/>
    <property type="chains" value="A/B/C/D=1334-1493"/>
</dbReference>
<dbReference type="PDB" id="7H6R">
    <property type="method" value="X-ray"/>
    <property type="resolution" value="1.42 A"/>
    <property type="chains" value="A/B/C/D=1334-1493"/>
</dbReference>
<dbReference type="PDB" id="7H6S">
    <property type="method" value="X-ray"/>
    <property type="resolution" value="1.35 A"/>
    <property type="chains" value="A/B/C/D=1334-1493"/>
</dbReference>
<dbReference type="PDB" id="7H6T">
    <property type="method" value="X-ray"/>
    <property type="resolution" value="1.34 A"/>
    <property type="chains" value="A/B/C/D=1334-1493"/>
</dbReference>
<dbReference type="PDB" id="7H6U">
    <property type="method" value="X-ray"/>
    <property type="resolution" value="1.48 A"/>
    <property type="chains" value="A/B/C/D=1334-1493"/>
</dbReference>
<dbReference type="PDB" id="7H6V">
    <property type="method" value="X-ray"/>
    <property type="resolution" value="1.43 A"/>
    <property type="chains" value="A/B/C/D=1334-1493"/>
</dbReference>
<dbReference type="PDB" id="7H6W">
    <property type="method" value="X-ray"/>
    <property type="resolution" value="1.38 A"/>
    <property type="chains" value="A/B/C/D=1334-1493"/>
</dbReference>
<dbReference type="PDB" id="7H6X">
    <property type="method" value="X-ray"/>
    <property type="resolution" value="1.33 A"/>
    <property type="chains" value="A/B/C/D=1334-1493"/>
</dbReference>
<dbReference type="PDB" id="7H6Y">
    <property type="method" value="X-ray"/>
    <property type="resolution" value="1.41 A"/>
    <property type="chains" value="A/B/C/D=1334-1493"/>
</dbReference>
<dbReference type="PDB" id="7H6Z">
    <property type="method" value="X-ray"/>
    <property type="resolution" value="1.32 A"/>
    <property type="chains" value="A/B/C/D=1334-1493"/>
</dbReference>
<dbReference type="PDB" id="7H70">
    <property type="method" value="X-ray"/>
    <property type="resolution" value="1.39 A"/>
    <property type="chains" value="A/B/C/D=1334-1493"/>
</dbReference>
<dbReference type="PDB" id="7H71">
    <property type="method" value="X-ray"/>
    <property type="resolution" value="1.32 A"/>
    <property type="chains" value="A/B/C/D=1334-1493"/>
</dbReference>
<dbReference type="PDB" id="7H72">
    <property type="method" value="X-ray"/>
    <property type="resolution" value="1.36 A"/>
    <property type="chains" value="A/B/C/D=1334-1493"/>
</dbReference>
<dbReference type="PDB" id="7H73">
    <property type="method" value="X-ray"/>
    <property type="resolution" value="1.38 A"/>
    <property type="chains" value="A/B/C/D=1334-1493"/>
</dbReference>
<dbReference type="PDB" id="7H74">
    <property type="method" value="X-ray"/>
    <property type="resolution" value="1.41 A"/>
    <property type="chains" value="A/B/C/D=1334-1493"/>
</dbReference>
<dbReference type="PDB" id="7H75">
    <property type="method" value="X-ray"/>
    <property type="resolution" value="1.44 A"/>
    <property type="chains" value="A/B/C/D=1334-1493"/>
</dbReference>
<dbReference type="PDB" id="7H76">
    <property type="method" value="X-ray"/>
    <property type="resolution" value="1.40 A"/>
    <property type="chains" value="A/B/C/D=1334-1493"/>
</dbReference>
<dbReference type="PDB" id="7H77">
    <property type="method" value="X-ray"/>
    <property type="resolution" value="1.40 A"/>
    <property type="chains" value="A/B/C/D=1334-1493"/>
</dbReference>
<dbReference type="PDB" id="7H78">
    <property type="method" value="X-ray"/>
    <property type="resolution" value="1.45 A"/>
    <property type="chains" value="A/B/C/D=1334-1493"/>
</dbReference>
<dbReference type="PDB" id="7H79">
    <property type="method" value="X-ray"/>
    <property type="resolution" value="1.39 A"/>
    <property type="chains" value="A/B/C/D=1334-1493"/>
</dbReference>
<dbReference type="PDB" id="7H7A">
    <property type="method" value="X-ray"/>
    <property type="resolution" value="1.36 A"/>
    <property type="chains" value="A/B/C/D=1334-1493"/>
</dbReference>
<dbReference type="PDB" id="7H7B">
    <property type="method" value="X-ray"/>
    <property type="resolution" value="1.47 A"/>
    <property type="chains" value="A/B/C/D=1334-1493"/>
</dbReference>
<dbReference type="PDB" id="7H7C">
    <property type="method" value="X-ray"/>
    <property type="resolution" value="1.39 A"/>
    <property type="chains" value="A/B/C/D=1334-1493"/>
</dbReference>
<dbReference type="PDB" id="7H7D">
    <property type="method" value="X-ray"/>
    <property type="resolution" value="1.46 A"/>
    <property type="chains" value="A/B/C/D=1334-1493"/>
</dbReference>
<dbReference type="PDB" id="7H7E">
    <property type="method" value="X-ray"/>
    <property type="resolution" value="1.40 A"/>
    <property type="chains" value="A/B/C/D=1334-1493"/>
</dbReference>
<dbReference type="PDB" id="7H7F">
    <property type="method" value="X-ray"/>
    <property type="resolution" value="1.47 A"/>
    <property type="chains" value="A/B/C/D=1334-1493"/>
</dbReference>
<dbReference type="PDB" id="7H7G">
    <property type="method" value="X-ray"/>
    <property type="resolution" value="1.37 A"/>
    <property type="chains" value="A/B/C/D=1334-1493"/>
</dbReference>
<dbReference type="PDB" id="7H7H">
    <property type="method" value="X-ray"/>
    <property type="resolution" value="1.50 A"/>
    <property type="chains" value="A/B/C/D=1334-1493"/>
</dbReference>
<dbReference type="PDB" id="7H7I">
    <property type="method" value="X-ray"/>
    <property type="resolution" value="1.53 A"/>
    <property type="chains" value="A/B/C/D=1334-1493"/>
</dbReference>
<dbReference type="PDB" id="7H7J">
    <property type="method" value="X-ray"/>
    <property type="resolution" value="1.42 A"/>
    <property type="chains" value="A/B/C/D=1334-1493"/>
</dbReference>
<dbReference type="PDB" id="7H7K">
    <property type="method" value="X-ray"/>
    <property type="resolution" value="1.41 A"/>
    <property type="chains" value="A/B/C/D=1334-1493"/>
</dbReference>
<dbReference type="PDB" id="7H7L">
    <property type="method" value="X-ray"/>
    <property type="resolution" value="1.35 A"/>
    <property type="chains" value="A/B/C/D=1334-1493"/>
</dbReference>
<dbReference type="PDB" id="7H7M">
    <property type="method" value="X-ray"/>
    <property type="resolution" value="1.49 A"/>
    <property type="chains" value="A/B/C/D=1334-1493"/>
</dbReference>
<dbReference type="PDB" id="7H7N">
    <property type="method" value="X-ray"/>
    <property type="resolution" value="1.42 A"/>
    <property type="chains" value="A/B/C/D=1334-1493"/>
</dbReference>
<dbReference type="PDB" id="7H7O">
    <property type="method" value="X-ray"/>
    <property type="resolution" value="1.39 A"/>
    <property type="chains" value="A/B/C/D=1334-1493"/>
</dbReference>
<dbReference type="PDB" id="7H7P">
    <property type="method" value="X-ray"/>
    <property type="resolution" value="1.43 A"/>
    <property type="chains" value="A/B/C/D=1334-1493"/>
</dbReference>
<dbReference type="PDB" id="7H7Q">
    <property type="method" value="X-ray"/>
    <property type="resolution" value="1.56 A"/>
    <property type="chains" value="A/B/C/D=1334-1493"/>
</dbReference>
<dbReference type="PDB" id="7H7R">
    <property type="method" value="X-ray"/>
    <property type="resolution" value="1.38 A"/>
    <property type="chains" value="A/B/C/D=1334-1493"/>
</dbReference>
<dbReference type="PDB" id="7H7S">
    <property type="method" value="X-ray"/>
    <property type="resolution" value="1.37 A"/>
    <property type="chains" value="A/B/C/D=1334-1493"/>
</dbReference>
<dbReference type="PDB" id="7H7T">
    <property type="method" value="X-ray"/>
    <property type="resolution" value="1.34 A"/>
    <property type="chains" value="A/B/C/D=1334-1493"/>
</dbReference>
<dbReference type="PDB" id="7H7U">
    <property type="method" value="X-ray"/>
    <property type="resolution" value="1.40 A"/>
    <property type="chains" value="A/B/C/D=1334-1493"/>
</dbReference>
<dbReference type="PDB" id="7H7V">
    <property type="method" value="X-ray"/>
    <property type="resolution" value="1.54 A"/>
    <property type="chains" value="A/B/C/D=1334-1493"/>
</dbReference>
<dbReference type="PDB" id="7H7W">
    <property type="method" value="X-ray"/>
    <property type="resolution" value="1.44 A"/>
    <property type="chains" value="A/B/C/D=1334-1493"/>
</dbReference>
<dbReference type="PDB" id="7H7X">
    <property type="method" value="X-ray"/>
    <property type="resolution" value="1.46 A"/>
    <property type="chains" value="A/B/C/D=1334-1493"/>
</dbReference>
<dbReference type="PDB" id="7H7Y">
    <property type="method" value="X-ray"/>
    <property type="resolution" value="1.37 A"/>
    <property type="chains" value="A/B/C/D=1334-1493"/>
</dbReference>
<dbReference type="PDB" id="7H7Z">
    <property type="method" value="X-ray"/>
    <property type="resolution" value="1.39 A"/>
    <property type="chains" value="A/B/C/D=1334-1493"/>
</dbReference>
<dbReference type="PDB" id="7H80">
    <property type="method" value="X-ray"/>
    <property type="resolution" value="1.78 A"/>
    <property type="chains" value="A/B/C/D=1334-1493"/>
</dbReference>
<dbReference type="PDB" id="7H81">
    <property type="method" value="X-ray"/>
    <property type="resolution" value="1.49 A"/>
    <property type="chains" value="A/B/C/D=1334-1493"/>
</dbReference>
<dbReference type="PDB" id="7H82">
    <property type="method" value="X-ray"/>
    <property type="resolution" value="1.43 A"/>
    <property type="chains" value="A/B/C/D=1334-1493"/>
</dbReference>
<dbReference type="PDB" id="7H83">
    <property type="method" value="X-ray"/>
    <property type="resolution" value="1.45 A"/>
    <property type="chains" value="A/B/C/D=1334-1493"/>
</dbReference>
<dbReference type="PDB" id="7H84">
    <property type="method" value="X-ray"/>
    <property type="resolution" value="1.38 A"/>
    <property type="chains" value="A/B/C/D=1334-1493"/>
</dbReference>
<dbReference type="PDB" id="7H85">
    <property type="method" value="X-ray"/>
    <property type="resolution" value="1.35 A"/>
    <property type="chains" value="A/B/C/D=1334-1493"/>
</dbReference>
<dbReference type="PDB" id="7H86">
    <property type="method" value="X-ray"/>
    <property type="resolution" value="1.53 A"/>
    <property type="chains" value="A/B/C/D=1334-1493"/>
</dbReference>
<dbReference type="PDB" id="7H87">
    <property type="method" value="X-ray"/>
    <property type="resolution" value="1.53 A"/>
    <property type="chains" value="A/B/C/D=1334-1493"/>
</dbReference>
<dbReference type="PDB" id="7H88">
    <property type="method" value="X-ray"/>
    <property type="resolution" value="1.68 A"/>
    <property type="chains" value="A/B/C/D=1334-1493"/>
</dbReference>
<dbReference type="PDB" id="7H89">
    <property type="method" value="X-ray"/>
    <property type="resolution" value="1.41 A"/>
    <property type="chains" value="A/B/C/D=1334-1493"/>
</dbReference>
<dbReference type="PDB" id="7H8A">
    <property type="method" value="X-ray"/>
    <property type="resolution" value="1.38 A"/>
    <property type="chains" value="A/B/C/D=1334-1493"/>
</dbReference>
<dbReference type="PDB" id="7H8B">
    <property type="method" value="X-ray"/>
    <property type="resolution" value="1.39 A"/>
    <property type="chains" value="A/B/C/D=1334-1493"/>
</dbReference>
<dbReference type="PDB" id="7H8C">
    <property type="method" value="X-ray"/>
    <property type="resolution" value="1.52 A"/>
    <property type="chains" value="A/B/C/D=1334-1493"/>
</dbReference>
<dbReference type="PDB" id="7H8D">
    <property type="method" value="X-ray"/>
    <property type="resolution" value="1.61 A"/>
    <property type="chains" value="A/B/C/D=1334-1493"/>
</dbReference>
<dbReference type="PDB" id="7H8E">
    <property type="method" value="X-ray"/>
    <property type="resolution" value="1.52 A"/>
    <property type="chains" value="A/B/C/D=1334-1493"/>
</dbReference>
<dbReference type="PDB" id="7H8F">
    <property type="method" value="X-ray"/>
    <property type="resolution" value="1.42 A"/>
    <property type="chains" value="A/B/C/D=1334-1493"/>
</dbReference>
<dbReference type="PDB" id="7H8G">
    <property type="method" value="X-ray"/>
    <property type="resolution" value="1.37 A"/>
    <property type="chains" value="A/B/C/D=1334-1493"/>
</dbReference>
<dbReference type="PDB" id="7H8H">
    <property type="method" value="X-ray"/>
    <property type="resolution" value="1.44 A"/>
    <property type="chains" value="A/B/C/D=1334-1493"/>
</dbReference>
<dbReference type="PDB" id="7H8I">
    <property type="method" value="X-ray"/>
    <property type="resolution" value="1.65 A"/>
    <property type="chains" value="A/B/C/D=1334-1493"/>
</dbReference>
<dbReference type="PDB" id="7H8J">
    <property type="method" value="X-ray"/>
    <property type="resolution" value="1.58 A"/>
    <property type="chains" value="A/B/C/D=1334-1493"/>
</dbReference>
<dbReference type="PDB" id="7H8K">
    <property type="method" value="X-ray"/>
    <property type="resolution" value="1.54 A"/>
    <property type="chains" value="A/B/C/D=1334-1493"/>
</dbReference>
<dbReference type="PDB" id="7H8L">
    <property type="method" value="X-ray"/>
    <property type="resolution" value="1.54 A"/>
    <property type="chains" value="A/B/C/D=1334-1493"/>
</dbReference>
<dbReference type="PDB" id="7H8M">
    <property type="method" value="X-ray"/>
    <property type="resolution" value="1.55 A"/>
    <property type="chains" value="A/B/C/D=1334-1493"/>
</dbReference>
<dbReference type="PDB" id="7H8N">
    <property type="method" value="X-ray"/>
    <property type="resolution" value="1.46 A"/>
    <property type="chains" value="A/B/C/D=1334-1493"/>
</dbReference>
<dbReference type="PDB" id="7H8O">
    <property type="method" value="X-ray"/>
    <property type="resolution" value="1.47 A"/>
    <property type="chains" value="A/B/C/D=1334-1493"/>
</dbReference>
<dbReference type="PDB" id="7H8P">
    <property type="method" value="X-ray"/>
    <property type="resolution" value="1.50 A"/>
    <property type="chains" value="A/B/C/D=1334-1493"/>
</dbReference>
<dbReference type="PDB" id="7H8Q">
    <property type="method" value="X-ray"/>
    <property type="resolution" value="1.42 A"/>
    <property type="chains" value="A/B/C/D=1334-1493"/>
</dbReference>
<dbReference type="PDB" id="7H8R">
    <property type="method" value="X-ray"/>
    <property type="resolution" value="1.53 A"/>
    <property type="chains" value="A/B/C/D=1334-1493"/>
</dbReference>
<dbReference type="PDB" id="7H8S">
    <property type="method" value="X-ray"/>
    <property type="resolution" value="1.50 A"/>
    <property type="chains" value="A/B/C/D=1334-1493"/>
</dbReference>
<dbReference type="PDB" id="7H8T">
    <property type="method" value="X-ray"/>
    <property type="resolution" value="1.43 A"/>
    <property type="chains" value="A/B/C/D=1334-1493"/>
</dbReference>
<dbReference type="PDB" id="7H8U">
    <property type="method" value="X-ray"/>
    <property type="resolution" value="1.56 A"/>
    <property type="chains" value="A/B/C/D=1334-1493"/>
</dbReference>
<dbReference type="PDB" id="7H8V">
    <property type="method" value="X-ray"/>
    <property type="resolution" value="1.38 A"/>
    <property type="chains" value="A/B/C/D=1334-1493"/>
</dbReference>
<dbReference type="PDB" id="7H8W">
    <property type="method" value="X-ray"/>
    <property type="resolution" value="1.42 A"/>
    <property type="chains" value="A/B/C/D=1334-1493"/>
</dbReference>
<dbReference type="PDB" id="7H8X">
    <property type="method" value="X-ray"/>
    <property type="resolution" value="1.50 A"/>
    <property type="chains" value="A/B/C/D=1334-1493"/>
</dbReference>
<dbReference type="PDB" id="7H8Y">
    <property type="method" value="X-ray"/>
    <property type="resolution" value="1.91 A"/>
    <property type="chains" value="A/B/C/D=1334-1493"/>
</dbReference>
<dbReference type="PDB" id="7H8Z">
    <property type="method" value="X-ray"/>
    <property type="resolution" value="1.47 A"/>
    <property type="chains" value="A/B/C/D=1334-1493"/>
</dbReference>
<dbReference type="PDB" id="7H90">
    <property type="method" value="X-ray"/>
    <property type="resolution" value="1.45 A"/>
    <property type="chains" value="A/B/C/D=1334-1493"/>
</dbReference>
<dbReference type="PDB" id="7H91">
    <property type="method" value="X-ray"/>
    <property type="resolution" value="1.48 A"/>
    <property type="chains" value="A/B/C/D=1334-1493"/>
</dbReference>
<dbReference type="PDB" id="7H92">
    <property type="method" value="X-ray"/>
    <property type="resolution" value="1.43 A"/>
    <property type="chains" value="A/B/C/D=1334-1493"/>
</dbReference>
<dbReference type="PDB" id="7H93">
    <property type="method" value="X-ray"/>
    <property type="resolution" value="1.44 A"/>
    <property type="chains" value="A/B/C/D=1334-1493"/>
</dbReference>
<dbReference type="PDB" id="7H94">
    <property type="method" value="X-ray"/>
    <property type="resolution" value="1.49 A"/>
    <property type="chains" value="A/B/C/D=1334-1493"/>
</dbReference>
<dbReference type="PDB" id="7H95">
    <property type="method" value="X-ray"/>
    <property type="resolution" value="1.49 A"/>
    <property type="chains" value="A/B/C/D=1334-1493"/>
</dbReference>
<dbReference type="PDB" id="7H96">
    <property type="method" value="X-ray"/>
    <property type="resolution" value="1.50 A"/>
    <property type="chains" value="A/B/C/D=1334-1493"/>
</dbReference>
<dbReference type="PDB" id="7H97">
    <property type="method" value="X-ray"/>
    <property type="resolution" value="1.54 A"/>
    <property type="chains" value="A/B/C/D=1334-1493"/>
</dbReference>
<dbReference type="PDB" id="7H98">
    <property type="method" value="X-ray"/>
    <property type="resolution" value="1.54 A"/>
    <property type="chains" value="A/B/C/D=1334-1493"/>
</dbReference>
<dbReference type="PDB" id="7H99">
    <property type="method" value="X-ray"/>
    <property type="resolution" value="1.43 A"/>
    <property type="chains" value="A/B/C/D=1334-1493"/>
</dbReference>
<dbReference type="PDB" id="7H9A">
    <property type="method" value="X-ray"/>
    <property type="resolution" value="1.63 A"/>
    <property type="chains" value="A/B/C/D=1334-1493"/>
</dbReference>
<dbReference type="PDB" id="7H9B">
    <property type="method" value="X-ray"/>
    <property type="resolution" value="1.61 A"/>
    <property type="chains" value="A/B/C/D=1334-1493"/>
</dbReference>
<dbReference type="PDB" id="7H9C">
    <property type="method" value="X-ray"/>
    <property type="resolution" value="1.41 A"/>
    <property type="chains" value="A/B/C/D=1334-1493"/>
</dbReference>
<dbReference type="PDB" id="7H9D">
    <property type="method" value="X-ray"/>
    <property type="resolution" value="1.53 A"/>
    <property type="chains" value="A/B/C/D=1334-1493"/>
</dbReference>
<dbReference type="PDB" id="7H9E">
    <property type="method" value="X-ray"/>
    <property type="resolution" value="1.49 A"/>
    <property type="chains" value="A/B/C/D=1334-1493"/>
</dbReference>
<dbReference type="PDB" id="7H9F">
    <property type="method" value="X-ray"/>
    <property type="resolution" value="1.61 A"/>
    <property type="chains" value="A/B/C/D=1334-1493"/>
</dbReference>
<dbReference type="PDB" id="7H9G">
    <property type="method" value="X-ray"/>
    <property type="resolution" value="1.53 A"/>
    <property type="chains" value="A/B/C/D=1334-1493"/>
</dbReference>
<dbReference type="PDB" id="7H9H">
    <property type="method" value="X-ray"/>
    <property type="resolution" value="1.54 A"/>
    <property type="chains" value="A/B/C/D=1334-1493"/>
</dbReference>
<dbReference type="PDB" id="7H9I">
    <property type="method" value="X-ray"/>
    <property type="resolution" value="1.49 A"/>
    <property type="chains" value="A/B/C/D=1334-1493"/>
</dbReference>
<dbReference type="PDB" id="7H9J">
    <property type="method" value="X-ray"/>
    <property type="resolution" value="1.88 A"/>
    <property type="chains" value="A/B/C/D=1334-1493"/>
</dbReference>
<dbReference type="PDB" id="7HIA">
    <property type="method" value="X-ray"/>
    <property type="resolution" value="1.54 A"/>
    <property type="chains" value="A/B/C/D=1334-1493"/>
</dbReference>
<dbReference type="PDB" id="7HIB">
    <property type="method" value="X-ray"/>
    <property type="resolution" value="1.58 A"/>
    <property type="chains" value="A/B/C/D=1334-1493"/>
</dbReference>
<dbReference type="PDB" id="7HIC">
    <property type="method" value="X-ray"/>
    <property type="resolution" value="1.68 A"/>
    <property type="chains" value="A/B/C/D=1334-1493"/>
</dbReference>
<dbReference type="PDB" id="7HID">
    <property type="method" value="X-ray"/>
    <property type="resolution" value="1.50 A"/>
    <property type="chains" value="A/B/C/D=1334-1493"/>
</dbReference>
<dbReference type="PDB" id="7HIE">
    <property type="method" value="X-ray"/>
    <property type="resolution" value="1.35 A"/>
    <property type="chains" value="A/B/C/D=1334-1493"/>
</dbReference>
<dbReference type="PDB" id="7HIF">
    <property type="method" value="X-ray"/>
    <property type="resolution" value="1.51 A"/>
    <property type="chains" value="A/B/C/D=1334-1493"/>
</dbReference>
<dbReference type="PDB" id="7HIG">
    <property type="method" value="X-ray"/>
    <property type="resolution" value="1.39 A"/>
    <property type="chains" value="A/B/C/D=1334-1493"/>
</dbReference>
<dbReference type="PDB" id="7HIH">
    <property type="method" value="X-ray"/>
    <property type="resolution" value="1.46 A"/>
    <property type="chains" value="A/B/C/D=1334-1493"/>
</dbReference>
<dbReference type="PDB" id="7HII">
    <property type="method" value="X-ray"/>
    <property type="resolution" value="1.50 A"/>
    <property type="chains" value="A/B/C/D=1334-1493"/>
</dbReference>
<dbReference type="PDB" id="7HIJ">
    <property type="method" value="X-ray"/>
    <property type="resolution" value="1.46 A"/>
    <property type="chains" value="A/B/C/D=1334-1493"/>
</dbReference>
<dbReference type="PDB" id="7HIK">
    <property type="method" value="X-ray"/>
    <property type="resolution" value="1.51 A"/>
    <property type="chains" value="A/B/C/D=1334-1493"/>
</dbReference>
<dbReference type="PDB" id="7HIL">
    <property type="method" value="X-ray"/>
    <property type="resolution" value="1.65 A"/>
    <property type="chains" value="A/B/C/D=1334-1493"/>
</dbReference>
<dbReference type="PDB" id="7HIM">
    <property type="method" value="X-ray"/>
    <property type="resolution" value="1.74 A"/>
    <property type="chains" value="A/B/C/D=1334-1493"/>
</dbReference>
<dbReference type="PDB" id="7HIN">
    <property type="method" value="X-ray"/>
    <property type="resolution" value="1.42 A"/>
    <property type="chains" value="A/B/C/D=1334-1493"/>
</dbReference>
<dbReference type="PDB" id="7HIO">
    <property type="method" value="X-ray"/>
    <property type="resolution" value="1.41 A"/>
    <property type="chains" value="A/B/C/D=1334-1493"/>
</dbReference>
<dbReference type="PDB" id="7HIP">
    <property type="method" value="X-ray"/>
    <property type="resolution" value="1.41 A"/>
    <property type="chains" value="A/B/C/D=1334-1493"/>
</dbReference>
<dbReference type="PDB" id="7HIQ">
    <property type="method" value="X-ray"/>
    <property type="resolution" value="1.52 A"/>
    <property type="chains" value="A/B/C/D=1334-1493"/>
</dbReference>
<dbReference type="PDB" id="7HIR">
    <property type="method" value="X-ray"/>
    <property type="resolution" value="1.40 A"/>
    <property type="chains" value="A/B/C/D=1334-1493"/>
</dbReference>
<dbReference type="PDB" id="7HIS">
    <property type="method" value="X-ray"/>
    <property type="resolution" value="1.42 A"/>
    <property type="chains" value="A/B/C/D=1334-1493"/>
</dbReference>
<dbReference type="PDB" id="7HIT">
    <property type="method" value="X-ray"/>
    <property type="resolution" value="1.51 A"/>
    <property type="chains" value="A/B/C/D=1334-1493"/>
</dbReference>
<dbReference type="PDB" id="7HIU">
    <property type="method" value="X-ray"/>
    <property type="resolution" value="1.44 A"/>
    <property type="chains" value="A/B/C/D=1334-1493"/>
</dbReference>
<dbReference type="PDB" id="7HIV">
    <property type="method" value="X-ray"/>
    <property type="resolution" value="1.45 A"/>
    <property type="chains" value="A/B/C/D=1334-1493"/>
</dbReference>
<dbReference type="PDB" id="7HIW">
    <property type="method" value="X-ray"/>
    <property type="resolution" value="1.41 A"/>
    <property type="chains" value="A/B/C/D=1334-1493"/>
</dbReference>
<dbReference type="PDB" id="7HIX">
    <property type="method" value="X-ray"/>
    <property type="resolution" value="1.45 A"/>
    <property type="chains" value="A/B/C/D=1334-1493"/>
</dbReference>
<dbReference type="PDB" id="7P27">
    <property type="method" value="NMR"/>
    <property type="chains" value="A=1334-1493"/>
</dbReference>
<dbReference type="PDB" id="7X01">
    <property type="method" value="EM"/>
    <property type="resolution" value="2.62 A"/>
    <property type="chains" value="A/B/C/D/E/F/G/H/I/J/K/L=1-516"/>
</dbReference>
<dbReference type="PDB" id="8AOV">
    <property type="method" value="EM"/>
    <property type="resolution" value="2.48 A"/>
    <property type="chains" value="A/C/E/G/I/K/M/O/Q/S/V/X=1-535"/>
</dbReference>
<dbReference type="PDB" id="8AOW">
    <property type="method" value="EM"/>
    <property type="resolution" value="2.70 A"/>
    <property type="chains" value="A/C/E/G/I/K/M/O/Q/S/V/X=1-535"/>
</dbReference>
<dbReference type="PDB" id="8AOX">
    <property type="method" value="EM"/>
    <property type="resolution" value="2.80 A"/>
    <property type="chains" value="A/BA/C/DA/E/FA/G/HA/I/JA/K/LA/M/NA/O/PA/Q/RA/S/TA/V/VA/X/Z=1-535"/>
</dbReference>
<dbReference type="PDB" id="8APX">
    <property type="method" value="EM"/>
    <property type="resolution" value="3.20 A"/>
    <property type="chains" value="A/B/C/D/E/F/G/H/I/J/K/L=1-469"/>
</dbReference>
<dbReference type="PDB" id="8AXV">
    <property type="method" value="EM"/>
    <property type="resolution" value="2.80 A"/>
    <property type="chains" value="A/B/C/D/E/F/G/H/I/J/K/L=1-535"/>
</dbReference>
<dbReference type="PDB" id="8JCE">
    <property type="method" value="EM"/>
    <property type="resolution" value="2.41 A"/>
    <property type="chains" value="A/B/C/D/E/F/G/H/I/J/K/L=1-516"/>
</dbReference>
<dbReference type="PDB" id="8PHZ">
    <property type="method" value="EM"/>
    <property type="resolution" value="2.35 A"/>
    <property type="chains" value="A/B/C/D/E=1334-1856"/>
</dbReference>
<dbReference type="PDB" id="8PK7">
    <property type="method" value="EM"/>
    <property type="resolution" value="2.52 A"/>
    <property type="chains" value="A=1334-1856"/>
</dbReference>
<dbReference type="PDBsum" id="3GPG"/>
<dbReference type="PDBsum" id="3GPO"/>
<dbReference type="PDBsum" id="3GPQ"/>
<dbReference type="PDBsum" id="3TRK"/>
<dbReference type="PDBsum" id="4TU0"/>
<dbReference type="PDBsum" id="5I22"/>
<dbReference type="PDBsum" id="6VUQ"/>
<dbReference type="PDBsum" id="6W7H"/>
<dbReference type="PDBsum" id="6W8K"/>
<dbReference type="PDBsum" id="6W8M"/>
<dbReference type="PDBsum" id="6W8Q"/>
<dbReference type="PDBsum" id="6W8Y"/>
<dbReference type="PDBsum" id="6W8Z"/>
<dbReference type="PDBsum" id="6W91"/>
<dbReference type="PDBsum" id="6Z0U"/>
<dbReference type="PDBsum" id="6Z0V"/>
<dbReference type="PDBsum" id="7DOP"/>
<dbReference type="PDBsum" id="7FGG"/>
<dbReference type="PDBsum" id="7FGH"/>
<dbReference type="PDBsum" id="7FGI"/>
<dbReference type="PDBsum" id="7H6J"/>
<dbReference type="PDBsum" id="7H6K"/>
<dbReference type="PDBsum" id="7H6L"/>
<dbReference type="PDBsum" id="7H6M"/>
<dbReference type="PDBsum" id="7H6N"/>
<dbReference type="PDBsum" id="7H6O"/>
<dbReference type="PDBsum" id="7H6P"/>
<dbReference type="PDBsum" id="7H6Q"/>
<dbReference type="PDBsum" id="7H6R"/>
<dbReference type="PDBsum" id="7H6S"/>
<dbReference type="PDBsum" id="7H6T"/>
<dbReference type="PDBsum" id="7H6U"/>
<dbReference type="PDBsum" id="7H6V"/>
<dbReference type="PDBsum" id="7H6W"/>
<dbReference type="PDBsum" id="7H6X"/>
<dbReference type="PDBsum" id="7H6Y"/>
<dbReference type="PDBsum" id="7H6Z"/>
<dbReference type="PDBsum" id="7H70"/>
<dbReference type="PDBsum" id="7H71"/>
<dbReference type="PDBsum" id="7H72"/>
<dbReference type="PDBsum" id="7H73"/>
<dbReference type="PDBsum" id="7H74"/>
<dbReference type="PDBsum" id="7H75"/>
<dbReference type="PDBsum" id="7H76"/>
<dbReference type="PDBsum" id="7H77"/>
<dbReference type="PDBsum" id="7H78"/>
<dbReference type="PDBsum" id="7H79"/>
<dbReference type="PDBsum" id="7H7A"/>
<dbReference type="PDBsum" id="7H7B"/>
<dbReference type="PDBsum" id="7H7C"/>
<dbReference type="PDBsum" id="7H7D"/>
<dbReference type="PDBsum" id="7H7E"/>
<dbReference type="PDBsum" id="7H7F"/>
<dbReference type="PDBsum" id="7H7G"/>
<dbReference type="PDBsum" id="7H7H"/>
<dbReference type="PDBsum" id="7H7I"/>
<dbReference type="PDBsum" id="7H7J"/>
<dbReference type="PDBsum" id="7H7K"/>
<dbReference type="PDBsum" id="7H7L"/>
<dbReference type="PDBsum" id="7H7M"/>
<dbReference type="PDBsum" id="7H7N"/>
<dbReference type="PDBsum" id="7H7O"/>
<dbReference type="PDBsum" id="7H7P"/>
<dbReference type="PDBsum" id="7H7Q"/>
<dbReference type="PDBsum" id="7H7R"/>
<dbReference type="PDBsum" id="7H7S"/>
<dbReference type="PDBsum" id="7H7T"/>
<dbReference type="PDBsum" id="7H7U"/>
<dbReference type="PDBsum" id="7H7V"/>
<dbReference type="PDBsum" id="7H7W"/>
<dbReference type="PDBsum" id="7H7X"/>
<dbReference type="PDBsum" id="7H7Y"/>
<dbReference type="PDBsum" id="7H7Z"/>
<dbReference type="PDBsum" id="7H80"/>
<dbReference type="PDBsum" id="7H81"/>
<dbReference type="PDBsum" id="7H82"/>
<dbReference type="PDBsum" id="7H83"/>
<dbReference type="PDBsum" id="7H84"/>
<dbReference type="PDBsum" id="7H85"/>
<dbReference type="PDBsum" id="7H86"/>
<dbReference type="PDBsum" id="7H87"/>
<dbReference type="PDBsum" id="7H88"/>
<dbReference type="PDBsum" id="7H89"/>
<dbReference type="PDBsum" id="7H8A"/>
<dbReference type="PDBsum" id="7H8B"/>
<dbReference type="PDBsum" id="7H8C"/>
<dbReference type="PDBsum" id="7H8D"/>
<dbReference type="PDBsum" id="7H8E"/>
<dbReference type="PDBsum" id="7H8F"/>
<dbReference type="PDBsum" id="7H8G"/>
<dbReference type="PDBsum" id="7H8H"/>
<dbReference type="PDBsum" id="7H8I"/>
<dbReference type="PDBsum" id="7H8J"/>
<dbReference type="PDBsum" id="7H8K"/>
<dbReference type="PDBsum" id="7H8L"/>
<dbReference type="PDBsum" id="7H8M"/>
<dbReference type="PDBsum" id="7H8N"/>
<dbReference type="PDBsum" id="7H8O"/>
<dbReference type="PDBsum" id="7H8P"/>
<dbReference type="PDBsum" id="7H8Q"/>
<dbReference type="PDBsum" id="7H8R"/>
<dbReference type="PDBsum" id="7H8S"/>
<dbReference type="PDBsum" id="7H8T"/>
<dbReference type="PDBsum" id="7H8U"/>
<dbReference type="PDBsum" id="7H8V"/>
<dbReference type="PDBsum" id="7H8W"/>
<dbReference type="PDBsum" id="7H8X"/>
<dbReference type="PDBsum" id="7H8Y"/>
<dbReference type="PDBsum" id="7H8Z"/>
<dbReference type="PDBsum" id="7H90"/>
<dbReference type="PDBsum" id="7H91"/>
<dbReference type="PDBsum" id="7H92"/>
<dbReference type="PDBsum" id="7H93"/>
<dbReference type="PDBsum" id="7H94"/>
<dbReference type="PDBsum" id="7H95"/>
<dbReference type="PDBsum" id="7H96"/>
<dbReference type="PDBsum" id="7H97"/>
<dbReference type="PDBsum" id="7H98"/>
<dbReference type="PDBsum" id="7H99"/>
<dbReference type="PDBsum" id="7H9A"/>
<dbReference type="PDBsum" id="7H9B"/>
<dbReference type="PDBsum" id="7H9C"/>
<dbReference type="PDBsum" id="7H9D"/>
<dbReference type="PDBsum" id="7H9E"/>
<dbReference type="PDBsum" id="7H9F"/>
<dbReference type="PDBsum" id="7H9G"/>
<dbReference type="PDBsum" id="7H9H"/>
<dbReference type="PDBsum" id="7H9I"/>
<dbReference type="PDBsum" id="7H9J"/>
<dbReference type="PDBsum" id="7HIA"/>
<dbReference type="PDBsum" id="7HIB"/>
<dbReference type="PDBsum" id="7HIC"/>
<dbReference type="PDBsum" id="7HID"/>
<dbReference type="PDBsum" id="7HIE"/>
<dbReference type="PDBsum" id="7HIF"/>
<dbReference type="PDBsum" id="7HIG"/>
<dbReference type="PDBsum" id="7HIH"/>
<dbReference type="PDBsum" id="7HII"/>
<dbReference type="PDBsum" id="7HIJ"/>
<dbReference type="PDBsum" id="7HIK"/>
<dbReference type="PDBsum" id="7HIL"/>
<dbReference type="PDBsum" id="7HIM"/>
<dbReference type="PDBsum" id="7HIN"/>
<dbReference type="PDBsum" id="7HIO"/>
<dbReference type="PDBsum" id="7HIP"/>
<dbReference type="PDBsum" id="7HIQ"/>
<dbReference type="PDBsum" id="7HIR"/>
<dbReference type="PDBsum" id="7HIS"/>
<dbReference type="PDBsum" id="7HIT"/>
<dbReference type="PDBsum" id="7HIU"/>
<dbReference type="PDBsum" id="7HIV"/>
<dbReference type="PDBsum" id="7HIW"/>
<dbReference type="PDBsum" id="7HIX"/>
<dbReference type="PDBsum" id="7P27"/>
<dbReference type="PDBsum" id="7X01"/>
<dbReference type="PDBsum" id="8AOV"/>
<dbReference type="PDBsum" id="8AOW"/>
<dbReference type="PDBsum" id="8AOX"/>
<dbReference type="PDBsum" id="8APX"/>
<dbReference type="PDBsum" id="8AXV"/>
<dbReference type="PDBsum" id="8JCE"/>
<dbReference type="PDBsum" id="8PHZ"/>
<dbReference type="PDBsum" id="8PK7"/>
<dbReference type="BMRB" id="Q8JUX6"/>
<dbReference type="EMDB" id="EMD-11023"/>
<dbReference type="EMDB" id="EMD-11024"/>
<dbReference type="EMDB" id="EMD-15553"/>
<dbReference type="EMDB" id="EMD-15554"/>
<dbReference type="EMDB" id="EMD-15555"/>
<dbReference type="EMDB" id="EMD-15578"/>
<dbReference type="EMDB" id="EMD-15704"/>
<dbReference type="EMDB" id="EMD-17678"/>
<dbReference type="EMDB" id="EMD-17729"/>
<dbReference type="EMDB" id="EMD-30796"/>
<dbReference type="EMDB" id="EMD-31580"/>
<dbReference type="EMDB" id="EMD-31581"/>
<dbReference type="EMDB" id="EMD-31582"/>
<dbReference type="EMDB" id="EMD-32914"/>
<dbReference type="EMDB" id="EMD-33591"/>
<dbReference type="EMDB" id="EMD-36159"/>
<dbReference type="SMR" id="Q8JUX6"/>
<dbReference type="IntAct" id="Q8JUX6">
    <property type="interactions" value="3"/>
</dbReference>
<dbReference type="BindingDB" id="Q8JUX6"/>
<dbReference type="ChEMBL" id="CHEMBL4295622"/>
<dbReference type="MEROPS" id="C09.001"/>
<dbReference type="GeneID" id="956309"/>
<dbReference type="KEGG" id="vg:956309"/>
<dbReference type="BRENDA" id="3.2.2.B6">
    <property type="organism ID" value="11217"/>
</dbReference>
<dbReference type="BRENDA" id="3.4.22.B79">
    <property type="organism ID" value="11217"/>
</dbReference>
<dbReference type="EvolutionaryTrace" id="Q8JUX6"/>
<dbReference type="Proteomes" id="UP000000569">
    <property type="component" value="Segment"/>
</dbReference>
<dbReference type="GO" id="GO:0044162">
    <property type="term" value="C:host cell cytoplasmic vesicle membrane"/>
    <property type="evidence" value="ECO:0007669"/>
    <property type="project" value="UniProtKB-SubCell"/>
</dbReference>
<dbReference type="GO" id="GO:0044176">
    <property type="term" value="C:host cell filopodium"/>
    <property type="evidence" value="ECO:0007669"/>
    <property type="project" value="UniProtKB-SubCell"/>
</dbReference>
<dbReference type="GO" id="GO:0042025">
    <property type="term" value="C:host cell nucleus"/>
    <property type="evidence" value="ECO:0007669"/>
    <property type="project" value="UniProtKB-SubCell"/>
</dbReference>
<dbReference type="GO" id="GO:0020002">
    <property type="term" value="C:host cell plasma membrane"/>
    <property type="evidence" value="ECO:0007669"/>
    <property type="project" value="UniProtKB-SubCell"/>
</dbReference>
<dbReference type="GO" id="GO:0016020">
    <property type="term" value="C:membrane"/>
    <property type="evidence" value="ECO:0007669"/>
    <property type="project" value="UniProtKB-KW"/>
</dbReference>
<dbReference type="GO" id="GO:0005524">
    <property type="term" value="F:ATP binding"/>
    <property type="evidence" value="ECO:0007669"/>
    <property type="project" value="UniProtKB-KW"/>
</dbReference>
<dbReference type="GO" id="GO:0016887">
    <property type="term" value="F:ATP hydrolysis activity"/>
    <property type="evidence" value="ECO:0007669"/>
    <property type="project" value="RHEA"/>
</dbReference>
<dbReference type="GO" id="GO:0008234">
    <property type="term" value="F:cysteine-type peptidase activity"/>
    <property type="evidence" value="ECO:0007669"/>
    <property type="project" value="UniProtKB-KW"/>
</dbReference>
<dbReference type="GO" id="GO:0005525">
    <property type="term" value="F:GTP binding"/>
    <property type="evidence" value="ECO:0007669"/>
    <property type="project" value="UniProtKB-KW"/>
</dbReference>
<dbReference type="GO" id="GO:0046872">
    <property type="term" value="F:metal ion binding"/>
    <property type="evidence" value="ECO:0007669"/>
    <property type="project" value="UniProtKB-KW"/>
</dbReference>
<dbReference type="GO" id="GO:0140818">
    <property type="term" value="F:mRNA 5'-triphosphate monophosphatase activity"/>
    <property type="evidence" value="ECO:0007669"/>
    <property type="project" value="RHEA"/>
</dbReference>
<dbReference type="GO" id="GO:0008174">
    <property type="term" value="F:mRNA methyltransferase activity"/>
    <property type="evidence" value="ECO:0007669"/>
    <property type="project" value="InterPro"/>
</dbReference>
<dbReference type="GO" id="GO:1990817">
    <property type="term" value="F:poly(A) RNA polymerase activity"/>
    <property type="evidence" value="ECO:0007669"/>
    <property type="project" value="UniProtKB-EC"/>
</dbReference>
<dbReference type="GO" id="GO:0004651">
    <property type="term" value="F:polynucleotide 5'-phosphatase activity"/>
    <property type="evidence" value="ECO:0007669"/>
    <property type="project" value="UniProtKB-EC"/>
</dbReference>
<dbReference type="GO" id="GO:0003723">
    <property type="term" value="F:RNA binding"/>
    <property type="evidence" value="ECO:0007669"/>
    <property type="project" value="UniProtKB-KW"/>
</dbReference>
<dbReference type="GO" id="GO:0003724">
    <property type="term" value="F:RNA helicase activity"/>
    <property type="evidence" value="ECO:0007669"/>
    <property type="project" value="UniProtKB-EC"/>
</dbReference>
<dbReference type="GO" id="GO:0003968">
    <property type="term" value="F:RNA-directed RNA polymerase activity"/>
    <property type="evidence" value="ECO:0007669"/>
    <property type="project" value="UniProtKB-KW"/>
</dbReference>
<dbReference type="GO" id="GO:0006370">
    <property type="term" value="P:7-methylguanosine mRNA capping"/>
    <property type="evidence" value="ECO:0007669"/>
    <property type="project" value="UniProtKB-KW"/>
</dbReference>
<dbReference type="GO" id="GO:0006351">
    <property type="term" value="P:DNA-templated transcription"/>
    <property type="evidence" value="ECO:0007669"/>
    <property type="project" value="InterPro"/>
</dbReference>
<dbReference type="GO" id="GO:0032259">
    <property type="term" value="P:methylation"/>
    <property type="evidence" value="ECO:0007669"/>
    <property type="project" value="UniProtKB-KW"/>
</dbReference>
<dbReference type="GO" id="GO:0016556">
    <property type="term" value="P:mRNA modification"/>
    <property type="evidence" value="ECO:0007669"/>
    <property type="project" value="InterPro"/>
</dbReference>
<dbReference type="GO" id="GO:0006508">
    <property type="term" value="P:proteolysis"/>
    <property type="evidence" value="ECO:0007669"/>
    <property type="project" value="UniProtKB-KW"/>
</dbReference>
<dbReference type="GO" id="GO:0051493">
    <property type="term" value="P:regulation of cytoskeleton organization"/>
    <property type="evidence" value="ECO:0000314"/>
    <property type="project" value="UniProtKB"/>
</dbReference>
<dbReference type="GO" id="GO:0039657">
    <property type="term" value="P:symbiont-mediated suppression of host gene expression"/>
    <property type="evidence" value="ECO:0007669"/>
    <property type="project" value="UniProtKB-KW"/>
</dbReference>
<dbReference type="GO" id="GO:0052170">
    <property type="term" value="P:symbiont-mediated suppression of host innate immune response"/>
    <property type="evidence" value="ECO:0007669"/>
    <property type="project" value="UniProtKB-KW"/>
</dbReference>
<dbReference type="GO" id="GO:0039563">
    <property type="term" value="P:symbiont-mediated suppression of host JAK-STAT cascade via inhibition of STAT1 activity"/>
    <property type="evidence" value="ECO:0007669"/>
    <property type="project" value="UniProtKB-KW"/>
</dbReference>
<dbReference type="GO" id="GO:0039523">
    <property type="term" value="P:symbiont-mediated suppression of host mRNA transcription via inhibition of RNA polymerase II activity"/>
    <property type="evidence" value="ECO:0007669"/>
    <property type="project" value="UniProtKB-KW"/>
</dbReference>
<dbReference type="GO" id="GO:0039502">
    <property type="term" value="P:symbiont-mediated suppression of host type I interferon-mediated signaling pathway"/>
    <property type="evidence" value="ECO:0007669"/>
    <property type="project" value="UniProtKB-KW"/>
</dbReference>
<dbReference type="GO" id="GO:0039694">
    <property type="term" value="P:viral RNA genome replication"/>
    <property type="evidence" value="ECO:0007669"/>
    <property type="project" value="InterPro"/>
</dbReference>
<dbReference type="CDD" id="cd21557">
    <property type="entry name" value="Macro_X_Nsp3-like"/>
    <property type="match status" value="1"/>
</dbReference>
<dbReference type="CDD" id="cd23250">
    <property type="entry name" value="Togaviridae_RdRp"/>
    <property type="match status" value="1"/>
</dbReference>
<dbReference type="FunFam" id="3.90.70.110:FF:000001">
    <property type="entry name" value="Non-structural polyprotein P1234"/>
    <property type="match status" value="1"/>
</dbReference>
<dbReference type="FunFam" id="3.40.220.10:FF:000015">
    <property type="entry name" value="Polyprotein P1234"/>
    <property type="match status" value="1"/>
</dbReference>
<dbReference type="FunFam" id="3.40.50.150:FF:000323">
    <property type="entry name" value="Polyprotein P1234"/>
    <property type="match status" value="1"/>
</dbReference>
<dbReference type="FunFam" id="3.40.50.300:FF:001403">
    <property type="entry name" value="Polyprotein P1234"/>
    <property type="match status" value="1"/>
</dbReference>
<dbReference type="FunFam" id="3.40.50.300:FF:001415">
    <property type="entry name" value="Polyprotein P1234"/>
    <property type="match status" value="1"/>
</dbReference>
<dbReference type="Gene3D" id="3.90.70.110">
    <property type="entry name" value="Alphavirus nsP2 protease domain"/>
    <property type="match status" value="1"/>
</dbReference>
<dbReference type="Gene3D" id="3.40.220.10">
    <property type="entry name" value="Leucine Aminopeptidase, subunit E, domain 1"/>
    <property type="match status" value="1"/>
</dbReference>
<dbReference type="Gene3D" id="3.40.50.300">
    <property type="entry name" value="P-loop containing nucleotide triphosphate hydrolases"/>
    <property type="match status" value="2"/>
</dbReference>
<dbReference type="Gene3D" id="3.40.50.150">
    <property type="entry name" value="Vaccinia Virus protein VP39"/>
    <property type="match status" value="1"/>
</dbReference>
<dbReference type="InterPro" id="IPR027351">
    <property type="entry name" value="(+)RNA_virus_helicase_core_dom"/>
</dbReference>
<dbReference type="InterPro" id="IPR002588">
    <property type="entry name" value="Alphavirus-like_MT_dom"/>
</dbReference>
<dbReference type="InterPro" id="IPR002620">
    <property type="entry name" value="Alphavirus_nsp2pro"/>
</dbReference>
<dbReference type="InterPro" id="IPR044936">
    <property type="entry name" value="Alphavirus_nsp2pro_sf"/>
</dbReference>
<dbReference type="InterPro" id="IPR043502">
    <property type="entry name" value="DNA/RNA_pol_sf"/>
</dbReference>
<dbReference type="InterPro" id="IPR002589">
    <property type="entry name" value="Macro_dom"/>
</dbReference>
<dbReference type="InterPro" id="IPR043472">
    <property type="entry name" value="Macro_dom-like"/>
</dbReference>
<dbReference type="InterPro" id="IPR044371">
    <property type="entry name" value="Macro_X_NSP3-like"/>
</dbReference>
<dbReference type="InterPro" id="IPR048891">
    <property type="entry name" value="nsP3_ZBD"/>
</dbReference>
<dbReference type="InterPro" id="IPR027417">
    <property type="entry name" value="P-loop_NTPase"/>
</dbReference>
<dbReference type="InterPro" id="IPR001788">
    <property type="entry name" value="RNA-dep_RNA_pol_alsuvir"/>
</dbReference>
<dbReference type="InterPro" id="IPR007094">
    <property type="entry name" value="RNA-dir_pol_PSvirus"/>
</dbReference>
<dbReference type="InterPro" id="IPR029063">
    <property type="entry name" value="SAM-dependent_MTases_sf"/>
</dbReference>
<dbReference type="InterPro" id="IPR047311">
    <property type="entry name" value="Togaviridae_RdRp"/>
</dbReference>
<dbReference type="InterPro" id="IPR049329">
    <property type="entry name" value="ToMV_Hel_N"/>
</dbReference>
<dbReference type="Pfam" id="PF01661">
    <property type="entry name" value="Macro"/>
    <property type="match status" value="1"/>
</dbReference>
<dbReference type="Pfam" id="PF20852">
    <property type="entry name" value="nsP3_ZBD"/>
    <property type="match status" value="1"/>
</dbReference>
<dbReference type="Pfam" id="PF01707">
    <property type="entry name" value="Peptidase_C9"/>
    <property type="match status" value="1"/>
</dbReference>
<dbReference type="Pfam" id="PF00978">
    <property type="entry name" value="RdRP_2"/>
    <property type="match status" value="1"/>
</dbReference>
<dbReference type="Pfam" id="PF20896">
    <property type="entry name" value="ToMV_Hel_N"/>
    <property type="match status" value="1"/>
</dbReference>
<dbReference type="Pfam" id="PF01443">
    <property type="entry name" value="Viral_helicase1"/>
    <property type="match status" value="1"/>
</dbReference>
<dbReference type="Pfam" id="PF01660">
    <property type="entry name" value="Vmethyltransf"/>
    <property type="match status" value="1"/>
</dbReference>
<dbReference type="SMART" id="SM00506">
    <property type="entry name" value="A1pp"/>
    <property type="match status" value="1"/>
</dbReference>
<dbReference type="SUPFAM" id="SSF56672">
    <property type="entry name" value="DNA/RNA polymerases"/>
    <property type="match status" value="1"/>
</dbReference>
<dbReference type="SUPFAM" id="SSF52949">
    <property type="entry name" value="Macro domain-like"/>
    <property type="match status" value="1"/>
</dbReference>
<dbReference type="SUPFAM" id="SSF52540">
    <property type="entry name" value="P-loop containing nucleoside triphosphate hydrolases"/>
    <property type="match status" value="1"/>
</dbReference>
<dbReference type="PROSITE" id="PS51743">
    <property type="entry name" value="ALPHAVIRUS_MT"/>
    <property type="match status" value="1"/>
</dbReference>
<dbReference type="PROSITE" id="PS51154">
    <property type="entry name" value="MACRO"/>
    <property type="match status" value="1"/>
</dbReference>
<dbReference type="PROSITE" id="PS51520">
    <property type="entry name" value="NSP2PRO"/>
    <property type="match status" value="1"/>
</dbReference>
<dbReference type="PROSITE" id="PS51657">
    <property type="entry name" value="PSRV_HELICASE"/>
    <property type="match status" value="1"/>
</dbReference>
<dbReference type="PROSITE" id="PS50507">
    <property type="entry name" value="RDRP_SSRNA_POS"/>
    <property type="match status" value="1"/>
</dbReference>
<keyword id="KW-0002">3D-structure</keyword>
<keyword id="KW-0067">ATP-binding</keyword>
<keyword id="KW-1262">Eukaryotic host gene expression shutoff by virus</keyword>
<keyword id="KW-1191">Eukaryotic host transcription shutoff by virus</keyword>
<keyword id="KW-0342">GTP-binding</keyword>
<keyword id="KW-0347">Helicase</keyword>
<keyword id="KW-1032">Host cell membrane</keyword>
<keyword id="KW-1034">Host cell projection</keyword>
<keyword id="KW-1035">Host cytoplasm</keyword>
<keyword id="KW-1036">Host cytoplasmic vesicle</keyword>
<keyword id="KW-1190">Host gene expression shutoff by virus</keyword>
<keyword id="KW-1043">Host membrane</keyword>
<keyword id="KW-1048">Host nucleus</keyword>
<keyword id="KW-0945">Host-virus interaction</keyword>
<keyword id="KW-0378">Hydrolase</keyword>
<keyword id="KW-1090">Inhibition of host innate immune response by virus</keyword>
<keyword id="KW-1114">Inhibition of host interferon signaling pathway by virus</keyword>
<keyword id="KW-1104">Inhibition of host RNA polymerase II by virus</keyword>
<keyword id="KW-1105">Inhibition of host STAT1 by virus</keyword>
<keyword id="KW-0922">Interferon antiviral system evasion</keyword>
<keyword id="KW-0449">Lipoprotein</keyword>
<keyword id="KW-0472">Membrane</keyword>
<keyword id="KW-0479">Metal-binding</keyword>
<keyword id="KW-0489">Methyltransferase</keyword>
<keyword id="KW-0506">mRNA capping</keyword>
<keyword id="KW-0507">mRNA processing</keyword>
<keyword id="KW-0511">Multifunctional enzyme</keyword>
<keyword id="KW-0547">Nucleotide-binding</keyword>
<keyword id="KW-0548">Nucleotidyltransferase</keyword>
<keyword id="KW-0564">Palmitate</keyword>
<keyword id="KW-0597">Phosphoprotein</keyword>
<keyword id="KW-0645">Protease</keyword>
<keyword id="KW-1185">Reference proteome</keyword>
<keyword id="KW-1159">RNA suppression of termination</keyword>
<keyword id="KW-0694">RNA-binding</keyword>
<keyword id="KW-0696">RNA-directed RNA polymerase</keyword>
<keyword id="KW-0949">S-adenosyl-L-methionine</keyword>
<keyword id="KW-0788">Thiol protease</keyword>
<keyword id="KW-0808">Transferase</keyword>
<keyword id="KW-0832">Ubl conjugation</keyword>
<keyword id="KW-0899">Viral immunoevasion</keyword>
<keyword id="KW-0693">Viral RNA replication</keyword>
<keyword id="KW-0862">Zinc</keyword>
<accession>Q8JUX6</accession>
<comment type="function">
    <molecule>Polyprotein P1234</molecule>
    <text evidence="20">Inactive precursor of the viral replicase, which is activated by cleavages carried out by the viral protease nsP2.</text>
</comment>
<comment type="function">
    <molecule>Polyprotein P123</molecule>
    <text evidence="1">The early replication complex formed by the polyprotein P123 and nsP4 synthesizes minus-strand RNAs (By similarity). As soon P123 is cleaved into mature proteins, the plus-strand RNAs synthesis begins (By similarity).</text>
</comment>
<comment type="function">
    <molecule>mRNA-capping enzyme nsP1</molecule>
    <text evidence="1 26 34">Cytoplasmic capping enzyme that catalyzes two virus-specific reactions: methyltransferase and guanylyltransferase (By similarity). mRNA-capping is necessary since all viral RNAs are synthesized in the cytoplasm, and host capping enzymes are restricted to the nucleus (Probable). The enzymatic reaction involves a covalent link between 7-methyl-GMP and nsP1, whereas eukaryotic capping enzymes form a covalent complex only with GMP (By similarity). nsP1 capping consists in the following reactions: GTP is first methylated into 7-methyl-GMP and then is covalently linked to nsP1 to form the m7GMp-nsP1 complex from which 7-methyl-GMP complex is transferred to the mRNA to create the cap structure (By similarity). NsP1 is also needed for the initiation of the minus-strand RNAs synthesis (By similarity). At the initiation of virus replication, mediates the assembly of the viral replication complex made of the non-structural proteins, the association of this complex with the inner face of the plasma membrane and the formation of membranous spherules that serve as replication complex factories (PubMed:33730549). Forms the neck of these spherules with a central channel for mediating communication and the passage of RNA, nucleotides, and small proteins between the viral replication complex and the host cytoplasm (PubMed:33730549). Palmitoylated nsP1 is remodeling host cell cytoskeleton, and induces filopodium-like structure formation at the surface of the host cell (PubMed:30404808).</text>
</comment>
<comment type="function">
    <molecule>Protease nsP2</molecule>
    <text evidence="1 2 11 12 14 17 20 25 37">Multifunctional protein whose N-terminus is part of the RNA polymerase complex and displays NTPase, RNA triphosphatase and helicase activities (PubMed:21811589, PubMed:24407286). NTPase and RNA triphosphatase are involved in viral RNA capping and helicase keeps a check on the dsRNA replication intermediates (By similarity). The C-terminus harbors a protease that specifically cleaves the polyproteins and releases the mature proteins (PubMed:26597768, PubMed:27845418). Required for the shutoff of minus-strand RNAs synthesis (By similarity). Specifically inhibits the host IFN response by promoting the nuclear export of host STAT1 (PubMed:29925658). Also inhibits host transcription by inducing the rapid proteasome-dependent degradation of POLR2A, a catalytic subunit of the RNAPII complex (PubMed:22514352). The resulting inhibition of cellular protein synthesis serves to ensure maximal viral gene expression and to evade host immune response (Probable).</text>
</comment>
<comment type="function">
    <molecule>Non-structural protein 3</molecule>
    <text evidence="1 16 18 19 21 22 39">Seems to be essential for minus-strand RNAs and subgenomic 26S mRNAs synthesis (By similarity). Displays mono-ADP-ribosylhydrolase activity (PubMed:28143925, PubMed:28150709). ADP-ribosylation is a post-translational modification that controls various processes of the host cell and the virus probably needs to revert it for optimal viral replication (PubMed:28143925, PubMed:28150709). Binds proteins of G3BP family and sequesters them into the viral RNA replication complexes thereby inhibiting the formation of host stress granules on viral mRNAs (PubMed:25653451). The nsp3-G3BP complexes bind viral RNAs and probably orchestrate the assembly of viral replication complexes, thanks to the ability of G3BP family members to self-assemble and bind DNA (Probable) (PubMed:27383630, PubMed:27509095).</text>
</comment>
<comment type="function">
    <molecule>RNA-directed RNA polymerase nsP4</molecule>
    <text evidence="1">RNA dependent RNA polymerase (By similarity). Replicates genomic and antigenomic RNA by recognizing replications specific signals. The early replication complex formed by the polyprotein P123 and nsP4 synthesizes minus-strand RNAs (By similarity). The late replication complex composed of fully processed nsP1-nsP4 is responsible for the production of genomic and subgenomic plus-strand RNAs (By similarity).</text>
</comment>
<comment type="catalytic activity">
    <reaction evidence="3">
        <text>GTP + S-adenosyl-L-methionine = N(7)-methyl-GTP + S-adenosyl-L-homocysteine</text>
        <dbReference type="Rhea" id="RHEA:46948"/>
        <dbReference type="ChEBI" id="CHEBI:37565"/>
        <dbReference type="ChEBI" id="CHEBI:57856"/>
        <dbReference type="ChEBI" id="CHEBI:59789"/>
        <dbReference type="ChEBI" id="CHEBI:87133"/>
    </reaction>
</comment>
<comment type="catalytic activity">
    <reaction evidence="3">
        <text>N(7)-methyl-GTP + L-histidyl-[protein] = N(tele)-(N(7)-methylguanosine 5'-phospho)-L-histidyl-[protein] + diphosphate</text>
        <dbReference type="Rhea" id="RHEA:54792"/>
        <dbReference type="Rhea" id="RHEA-COMP:9745"/>
        <dbReference type="Rhea" id="RHEA-COMP:13995"/>
        <dbReference type="ChEBI" id="CHEBI:29979"/>
        <dbReference type="ChEBI" id="CHEBI:33019"/>
        <dbReference type="ChEBI" id="CHEBI:87133"/>
        <dbReference type="ChEBI" id="CHEBI:138334"/>
    </reaction>
    <physiologicalReaction direction="left-to-right" evidence="3">
        <dbReference type="Rhea" id="RHEA:54793"/>
    </physiologicalReaction>
</comment>
<comment type="catalytic activity">
    <reaction evidence="3">
        <text>N(tele)-(N(7)-methylguanosine 5'-phospho)-L-histidyl-[protein] + a 5'-end diphospho-(purine-ribonucleoside) in mRNA + H(+) = a 5'-end (N(7)-methyl 5'-triphosphoguanosine)-(purine-ribonucleoside) in mRNA + L-histidyl-[protein]</text>
        <dbReference type="Rhea" id="RHEA:54800"/>
        <dbReference type="Rhea" id="RHEA-COMP:9745"/>
        <dbReference type="Rhea" id="RHEA-COMP:12925"/>
        <dbReference type="Rhea" id="RHEA-COMP:13929"/>
        <dbReference type="Rhea" id="RHEA-COMP:13995"/>
        <dbReference type="ChEBI" id="CHEBI:15378"/>
        <dbReference type="ChEBI" id="CHEBI:29979"/>
        <dbReference type="ChEBI" id="CHEBI:133968"/>
        <dbReference type="ChEBI" id="CHEBI:138276"/>
        <dbReference type="ChEBI" id="CHEBI:138334"/>
    </reaction>
</comment>
<comment type="catalytic activity">
    <reaction evidence="11">
        <text>a 5'-end triphospho-ribonucleoside in mRNA + H2O = a 5'-end diphospho-ribonucleoside in mRNA + phosphate + H(+)</text>
        <dbReference type="Rhea" id="RHEA:67004"/>
        <dbReference type="Rhea" id="RHEA-COMP:17164"/>
        <dbReference type="Rhea" id="RHEA-COMP:17165"/>
        <dbReference type="ChEBI" id="CHEBI:15377"/>
        <dbReference type="ChEBI" id="CHEBI:15378"/>
        <dbReference type="ChEBI" id="CHEBI:43474"/>
        <dbReference type="ChEBI" id="CHEBI:167616"/>
        <dbReference type="ChEBI" id="CHEBI:167618"/>
        <dbReference type="EC" id="3.6.1.74"/>
    </reaction>
    <physiologicalReaction direction="left-to-right" evidence="11">
        <dbReference type="Rhea" id="RHEA:67005"/>
    </physiologicalReaction>
</comment>
<comment type="catalytic activity">
    <reaction evidence="11 14">
        <text>a ribonucleoside 5'-triphosphate + H2O = a ribonucleoside 5'-diphosphate + phosphate + H(+)</text>
        <dbReference type="Rhea" id="RHEA:23680"/>
        <dbReference type="ChEBI" id="CHEBI:15377"/>
        <dbReference type="ChEBI" id="CHEBI:15378"/>
        <dbReference type="ChEBI" id="CHEBI:43474"/>
        <dbReference type="ChEBI" id="CHEBI:57930"/>
        <dbReference type="ChEBI" id="CHEBI:61557"/>
        <dbReference type="EC" id="3.6.1.15"/>
    </reaction>
</comment>
<comment type="catalytic activity">
    <reaction evidence="11 14">
        <text>ATP + H2O = ADP + phosphate + H(+)</text>
        <dbReference type="Rhea" id="RHEA:13065"/>
        <dbReference type="ChEBI" id="CHEBI:15377"/>
        <dbReference type="ChEBI" id="CHEBI:15378"/>
        <dbReference type="ChEBI" id="CHEBI:30616"/>
        <dbReference type="ChEBI" id="CHEBI:43474"/>
        <dbReference type="ChEBI" id="CHEBI:456216"/>
        <dbReference type="EC" id="3.6.4.13"/>
    </reaction>
</comment>
<comment type="catalytic activity">
    <reaction evidence="5">
        <text>RNA(n) + a ribonucleoside 5'-triphosphate = RNA(n+1) + diphosphate</text>
        <dbReference type="Rhea" id="RHEA:21248"/>
        <dbReference type="Rhea" id="RHEA-COMP:14527"/>
        <dbReference type="Rhea" id="RHEA-COMP:17342"/>
        <dbReference type="ChEBI" id="CHEBI:33019"/>
        <dbReference type="ChEBI" id="CHEBI:61557"/>
        <dbReference type="ChEBI" id="CHEBI:140395"/>
        <dbReference type="EC" id="2.7.7.48"/>
    </reaction>
</comment>
<comment type="catalytic activity">
    <reaction evidence="21 22">
        <text>4-O-(ADP-D-ribosyl)-L-aspartyl-[protein] + H2O = L-aspartyl-[protein] + ADP-D-ribose + H(+)</text>
        <dbReference type="Rhea" id="RHEA:54428"/>
        <dbReference type="Rhea" id="RHEA-COMP:9867"/>
        <dbReference type="Rhea" id="RHEA-COMP:13832"/>
        <dbReference type="ChEBI" id="CHEBI:15377"/>
        <dbReference type="ChEBI" id="CHEBI:15378"/>
        <dbReference type="ChEBI" id="CHEBI:29961"/>
        <dbReference type="ChEBI" id="CHEBI:57967"/>
        <dbReference type="ChEBI" id="CHEBI:138102"/>
    </reaction>
    <physiologicalReaction direction="left-to-right" evidence="21 22">
        <dbReference type="Rhea" id="RHEA:54429"/>
    </physiologicalReaction>
</comment>
<comment type="catalytic activity">
    <reaction evidence="21 22">
        <text>5-O-(ADP-D-ribosyl)-L-glutamyl-[protein] + H2O = L-glutamyl-[protein] + ADP-D-ribose + H(+)</text>
        <dbReference type="Rhea" id="RHEA:58248"/>
        <dbReference type="Rhea" id="RHEA-COMP:10208"/>
        <dbReference type="Rhea" id="RHEA-COMP:15089"/>
        <dbReference type="ChEBI" id="CHEBI:15377"/>
        <dbReference type="ChEBI" id="CHEBI:15378"/>
        <dbReference type="ChEBI" id="CHEBI:29973"/>
        <dbReference type="ChEBI" id="CHEBI:57967"/>
        <dbReference type="ChEBI" id="CHEBI:142540"/>
    </reaction>
    <physiologicalReaction direction="left-to-right" evidence="21 22">
        <dbReference type="Rhea" id="RHEA:58249"/>
    </physiologicalReaction>
</comment>
<comment type="catalytic activity">
    <reaction evidence="1">
        <text>RNA(n) + ATP = RNA(n)-3'-adenine ribonucleotide + diphosphate</text>
        <dbReference type="Rhea" id="RHEA:11332"/>
        <dbReference type="Rhea" id="RHEA-COMP:14527"/>
        <dbReference type="Rhea" id="RHEA-COMP:17347"/>
        <dbReference type="ChEBI" id="CHEBI:30616"/>
        <dbReference type="ChEBI" id="CHEBI:33019"/>
        <dbReference type="ChEBI" id="CHEBI:140395"/>
        <dbReference type="ChEBI" id="CHEBI:173115"/>
        <dbReference type="EC" id="2.7.7.19"/>
    </reaction>
</comment>
<comment type="catalytic activity">
    <reaction evidence="10">
        <text>ADP-alpha-D-ribose 1''-phosphate + H2O = ADP-D-ribose + phosphate</text>
        <dbReference type="Rhea" id="RHEA:25029"/>
        <dbReference type="ChEBI" id="CHEBI:15377"/>
        <dbReference type="ChEBI" id="CHEBI:43474"/>
        <dbReference type="ChEBI" id="CHEBI:57967"/>
        <dbReference type="ChEBI" id="CHEBI:58753"/>
        <dbReference type="EC" id="3.1.3.84"/>
    </reaction>
    <physiologicalReaction direction="left-to-right" evidence="10">
        <dbReference type="Rhea" id="RHEA:25030"/>
    </physiologicalReaction>
</comment>
<comment type="cofactor">
    <cofactor evidence="1">
        <name>Mg(2+)</name>
        <dbReference type="ChEBI" id="CHEBI:18420"/>
    </cofactor>
    <cofactor evidence="1">
        <name>Mn(2+)</name>
        <dbReference type="ChEBI" id="CHEBI:29035"/>
    </cofactor>
    <text evidence="1">For nsP4 adenylyltransferase activity; Mn(2+) supports catalysis at 60% of the levels observed with Mg(2+).</text>
</comment>
<comment type="cofactor">
    <cofactor>
        <name>Mg(2+)</name>
        <dbReference type="ChEBI" id="CHEBI:18420"/>
    </cofactor>
    <text evidence="1">For nsP4 RNA-directed RNA polymerase activity.</text>
</comment>
<comment type="cofactor">
    <cofactor evidence="3">
        <name>Mg(2+)</name>
        <dbReference type="ChEBI" id="CHEBI:18420"/>
    </cofactor>
    <text evidence="3">For nsP1 guanylylation.</text>
</comment>
<comment type="cofactor">
    <cofactor>
        <name>Mg(2+)</name>
        <dbReference type="ChEBI" id="CHEBI:18420"/>
    </cofactor>
    <text evidence="11 14">For nsP2 RNA triphosphatase activity.</text>
</comment>
<comment type="cofactor">
    <cofactor>
        <name>Mg(2+)</name>
        <dbReference type="ChEBI" id="CHEBI:18420"/>
    </cofactor>
    <text evidence="11 14">For nsP2 NTPase activity.</text>
</comment>
<comment type="biophysicochemical properties">
    <phDependence>
        <text evidence="11 14">Optimum pH is 7.2 for nsP2 NTPase.</text>
    </phDependence>
    <temperatureDependence>
        <text evidence="11">Optimum temperature is 37 degrees Celsius for nsP2 NTPase.</text>
    </temperatureDependence>
</comment>
<comment type="subunit">
    <molecule>mRNA-capping enzyme nsP1</molecule>
    <text evidence="13 32 33 34 35">Homododecamer (PubMed:33328629, PubMed:33730549). The enzyme forms a membrane-associated dodecameric ring with a central channel for the exchange of between the viral replication factories and the host cytoplasm (PubMed:33328629, PubMed:33730549). Interacts with non-structural protein 3 (PubMed:22951312). Interacts with RNA-directed RNA polymerase nsP4 (PubMed:22951312). Interacts with protease nsP2 (PubMed:22951312). Interacts with itself (PubMed:22951312). Interacts with host STING1; this interaction results in inhibition of cGAS-STING signaling and increased levels of palmitoylation and protein stabilization of nsP1 (PubMed:33057424). Interacts with host TMEM45B; this interaction leads to viral replication inhibition (PubMed:35938871).</text>
</comment>
<comment type="subunit">
    <molecule>Non-structural protein 3</molecule>
    <text evidence="13 15 18 19 24 27 29 30 31 40">Interacts with mRNA-capping enzyme nsP1 (PubMed:22951312). Interacts (via C-terminus) with host G3BP1; this interaction inhibits the formation of host stress granules on viral mRNAs and the nsp3-G3BP1 complexes bind viral RNAs and probably orchestrate the assembly of viral replication complexes (PubMed:24623412, PubMed:27383630, PubMed:27509095, PubMed:29899097). Interacts (via C-terminus) with host G3BP2; this interaction inhibits the formation of host stress granules on viral mRNAs and the nsp3-G3BP2 complexes bind viral RNAs and probably orchestrate the assembly of viral replication complexes (Probable). Interacts (via C-terminus) with host NAP1L1 (PubMed:29899097). Interacts (via C-terminus) with host NAP1L4 (PubMed:29899097). Interacts (via C-terminus) with host DHX9; this interaction allows the recruitment of DHX9 to the plasma membrane, where it associates with viral replication complexes and may play a role in the translation-to-replication switch (PubMed:30463980). Interacts (via C-terminus) with host FHL1 (via LIM domain 1); this interaction is required for viral RNA replication (PubMed:31554973, PubMed:33055253). Interacts (via C-terminus) with host CD2AP; this interaction plays a role in initiation of viral replication (PubMed:31493651). Interacts (via C-terminus) with host SH3KBP1; this interaction plays a role in initiation of viral replication (PubMed:31493651).</text>
</comment>
<comment type="subunit">
    <molecule>RNA-directed RNA polymerase nsP4</molecule>
    <text evidence="13 35">Interacts with mRNA-capping enzyme nsP1 (PubMed:22951312). Interacts with protease nsP2 (PubMed:22951312). interacts with itself (PubMed:22951312). Interacts with host TMEM45B; this interaction leads to viral replication inhibition (PubMed:35938871).</text>
</comment>
<comment type="subunit">
    <molecule>Protease nsP2</molecule>
    <text evidence="1 3 13">Interacts with RNA-directed RNA polymerase nsP4 (PubMed:22951312). Interacts with mRNA-capping enzyme nsP1 (PubMed:22951312). Interacts with KPNA1/karyopherin-alpha1; this interaction probably allows the active transport of protease nsP2 into the host nucleus (By similarity).</text>
</comment>
<comment type="subcellular location">
    <molecule>Polyprotein P1234</molecule>
    <subcellularLocation>
        <location evidence="36">Host cytoplasmic vesicle membrane</location>
        <topology evidence="36">Peripheral membrane protein</topology>
    </subcellularLocation>
    <text evidence="36">Part of cytoplasmic vesicles, which are probably formed at the plasma membrane and internalized leading to late endosomal/lysosomal spherules containing the replication complex.</text>
</comment>
<comment type="subcellular location">
    <molecule>Polyprotein P123</molecule>
    <subcellularLocation>
        <location evidence="36">Host cytoplasmic vesicle membrane</location>
        <topology evidence="36">Peripheral membrane protein</topology>
    </subcellularLocation>
    <text evidence="36">Part of cytoplasmic vesicles, which are probably formed at the plasma membrane and internalized leading to late endosomal/lysosomal spherules containing the replication complex.</text>
</comment>
<comment type="subcellular location">
    <molecule>mRNA-capping enzyme nsP1</molecule>
    <subcellularLocation>
        <location evidence="2">Host cytoplasmic vesicle membrane</location>
        <topology evidence="2">Lipid-anchor</topology>
    </subcellularLocation>
    <subcellularLocation>
        <location evidence="2">Host cell membrane</location>
        <topology evidence="2">Lipid-anchor</topology>
        <orientation evidence="2">Cytoplasmic side</orientation>
    </subcellularLocation>
    <subcellularLocation>
        <location evidence="26">Host cell projection</location>
        <location evidence="26">Host filopodium</location>
    </subcellularLocation>
    <text evidence="2 26">In the late phase of infection, the polyprotein is quickly cleaved before localization to cellular membranes. Then a fraction of nsP1 localizes to the inner surface of the plasma membrane and its filopodial extensions. Only the palmitoylated nsP1 localizes to the host filopodia (PubMed:30404808). NsP1 is also part of cytoplasmic vesicles, which are probably formed at the plasma membrane and internalized leading to late endosomal/lysosomal spherules containing the replication complex (By similarity).</text>
</comment>
<comment type="subcellular location">
    <molecule>Protease nsP2</molecule>
    <subcellularLocation>
        <location evidence="2">Host cytoplasmic vesicle membrane</location>
        <topology evidence="2">Peripheral membrane protein</topology>
    </subcellularLocation>
    <subcellularLocation>
        <location evidence="3">Host nucleus</location>
    </subcellularLocation>
    <subcellularLocation>
        <location evidence="3">Host cytoplasm</location>
    </subcellularLocation>
    <text evidence="2 3">In the late phase of infection, the polyprotein is quickly cleaved before localization to cellular membranes. Then approximately half of nsP2 is found in the nucleus (By similarity). Shuttles between cytoplasm and nucleus (By similarity). NsP2 is also part of cytoplasmic vesicles, which are probably formed at the plasma membrane and internalized leading to late endosomal/lysosomal spherules containing the replication complex (By similarity).</text>
</comment>
<comment type="subcellular location">
    <molecule>Non-structural protein 3</molecule>
    <subcellularLocation>
        <location evidence="1">Host cytoplasmic vesicle membrane</location>
        <topology evidence="36">Peripheral membrane protein</topology>
    </subcellularLocation>
    <text evidence="1">In the late phase of infection, the polyprotein is quickly cleaved before localization to cellular membranes. Then nsP3 forms aggregates in cytoplasm (By similarity). NsP3 is also part of cytoplasmic vesicles, which are probably formed at the plasma membrane and internalized leading to late endosomal/lysosomal spherules containing the replication complex (By similarity).</text>
</comment>
<comment type="subcellular location">
    <molecule>RNA-directed RNA polymerase nsP4</molecule>
    <subcellularLocation>
        <location>Host cytoplasmic vesicle membrane</location>
        <topology evidence="2">Peripheral membrane protein</topology>
    </subcellularLocation>
    <text evidence="2">NsP4 is part of cytoplasmic vesicles, which are probably formed at the plasma membrane and internalized leading to late endosomal/lysosomal spherules containing the replication complex.</text>
</comment>
<comment type="domain">
    <molecule>mRNA-capping enzyme nsP1</molecule>
    <text evidence="34">The N-terminus binds a zinc ion which stabilizes this region (PubMed:33730549). The C-terminus is disordered (PubMed:33730549).</text>
</comment>
<comment type="domain">
    <molecule>Protease nsP2</molecule>
    <text evidence="3 14 25">The N-terminus exhibits NTPase and RNA triphosphatase activities and is proposed to have helicase activity, whereas the C-terminus possesses protease activity (PubMed:24407286). Contains a nuclear localization signal and a nuclear export signal, these two motifs are probably involved in the shuttling between the cytoplasm and the nucleus of nsP2 (By similarity). The C-terminus is required for promoting the export of host STAT1 (PubMed:29925658).</text>
</comment>
<comment type="domain">
    <molecule>Non-structural protein 3</molecule>
    <text evidence="18 19 21 22 24 27 28 29">In the N-terminus, the macro domain displays a mono-ADP-ribosylhydrolase activity (PubMed:28143925, PubMed:28150709). The central part called, the alphavirus unique domain (AUD) has a zinc-binding function (PubMed:30668592). The C-terminus region, also called hypervariable domain (HVD), is mainly disordered and binds several host proteins (PubMed:29899097, PubMed:30463980, PubMed:31493651). This intrinsically disordered domain contains 2 SH3 domain-binding sites and 2 FGDF motifs necessary and sufficient for the formation of nsP3/G3BP complexes (PubMed:27383630, PubMed:27509095, PubMed:29899097).</text>
</comment>
<comment type="PTM">
    <molecule>Polyprotein P1234</molecule>
    <text evidence="1 20">Specific enzymatic cleavages in vivo yield mature proteins (PubMed:27845418). The processing of the polyprotein is temporally regulated (By similarity). In early stages (1.7 hpi), P1234 is first cleaved in trans through its nsP2 protease activity, releasing P123 and nsP4, which associate to form the early replication complex (By similarity). At the same time, P1234 is also cut at the nsP1/nsP2 site early in infection but with lower efficiency (By similarity). After replication of the viral minus-strand RNAs (4 hpi), the polyproteins are cut at the nsP1/nsP2 and nsP2/nsP3 sites very efficiently, preventing accumulation of P123 and P1234 and allowing the formation of the late replication complex (By similarity). NsP3/nsP4 site is not cleaved anymore and P34 is produced rather than nsP4 (By similarity).</text>
</comment>
<comment type="PTM">
    <molecule>Polyprotein P123</molecule>
    <text evidence="1">Specific enzymatic cleavages in vivo yield mature proteins (By similarity). The processing of the polyprotein is temporally regulated (By similarity). In early stages (1.7 hpi), P123 is cleaved at the nsP1/nsP2 site with low efficiency (By similarity). After replication of the viral minus-strand RNAs (4 hpi), the polyproteins are cut at the nsP1/nsP2 and nsP2/nsP3 sites very efficiently, preventing accumulation of P123 and allowing the formation of the late replication complex (By similarity).</text>
</comment>
<comment type="PTM">
    <molecule>mRNA-capping enzyme nsP1</molecule>
    <text evidence="26 32">Palmitoylated by host palmitoyltransferases ZDHHC2 and ZDHHC19 (PubMed:30404808). Palmitoylation is increased by the interacton with host STING1 (PubMed:33057424).</text>
</comment>
<comment type="PTM">
    <molecule>Non-structural protein 3</molecule>
    <text evidence="2">Phosphorylated by host on serines and threonines.</text>
</comment>
<comment type="PTM">
    <molecule>RNA-directed RNA polymerase nsP4</molecule>
    <text evidence="1">Ubiquitinated; targets the protein for rapid degradation via the ubiquitin system (By similarity). Nsp4 is present in extremely low quantities due to low frequency of translation through the amber stop-codon and the degradation by the ubiquitin pathway (By similarity).</text>
</comment>
<comment type="miscellaneous">
    <text evidence="1">Viral replication produces dsRNA in the late phase of infection, resulting in a strong activation of host EIF2AK2/PKR, leading to almost complete phosphorylation of EIF2A (By similarity). This inactivates completely cellular translation initiation, resulting shutoff of host proteins synthesis (By similarity). However, phosphorylation of EIF2A is probably not the only mechanism responsible for the host translation shutoff (By similarity). The viral translation can still occur normally because it relies on a hairpin structure in the coding region of sgRNA and is EIF2A-, EIF2D-, EIF4G- EIF4A-independent (By similarity).</text>
</comment>
<comment type="caution">
    <text evidence="23 36">There is no stop codon readthrough before nsP4 like in other CHIKV strains. The opal termination codon may have been mutated to a sense codon on passage in cell culture. The presence of an opal codon may be a requirement for viral maintenance in both vertebrate and invertebrate hosts and a selective advantage may be conferred in cell culture for the sense codon (PubMed:29138302).</text>
</comment>
<sequence length="2474" mass="275652">MDPVYVDIDADSAFLKALQRAYPMFEVEPRQVTPNDHANARAFSHLAIKLIEQEIDPDSTILDIGSAPARRMMSDRKYHCVCPMRSAEDPERLANYARKLASAAGKVLDRNISGKIGDLQAVMAVPDTETPTFCLHTDVSCRQRADVAIYQDVYAVHAPTSLYHQAIKGVRLAYWVGFDTTPFMYNAMAGAYPSYSTNWADEQVLKAKNIGLCSTDLTEGRRGKLSIMRGKKLEPCDRVLFSVGSTLYPESRKLLKSWHLPSVFHLKGKLSFTCRCDTVVSCEGYVVKRITMSPGLYGKTTGYAVTHHADGFLMCKTTDTVDGERVSFSVCTYVPATICDQMTGILATEVTPEDAQKLLVGLNQRIVVNGRTQRNTNTMKNYMIPVVAQAFSKWAKECRKDMEDEKLLGVRERTLTCCCLWAFKKQKTHTVYKRPDTQSIQKVQAEFDSFVVPSLWSSGLSIPLRTRIKWLLSKVPKTDLTPYSGDAQEARDAEKEAEEEREAELTLEALPPLQAAQEDVQVEIDVEQLEDRAGAGIIETPRGAIKVTAQPTDHVVGEYLVLSPQTVLRSQKLSLIHALAEQVKTCTHSGRAGRYAVEAYDGRVLVPSGYAISPEDFQSLSESATMVYNEREFVNRKLHHIAMHGPALNTDEESYELVRAERTEHEYVYDVDQRRCCKKEEAAGLVLVGDLTNPPYHEFAYEGLKIRPACPYKIAVIGVFGVPGSGKSAIIKNLVTRQDLVTSGKKENCQEITTDVMRQRGLEISARTVDSLLLNGCNRPVDVLYVDEAFACHSGTLLALIALVRPRQKVVLCGDPKQCGFFNMMQMKVNYNHNICTQVYHKSISRRCTLPVTAIVSSLHYEGKMRTTNEYNKPIVVDTTGSTKPDPGDLVLTCFRGWVKQLQIDYRGHEVMTAAASQGLTRKGVYAVRQKVNENPLYASTSEHVNVLLTRTEGKLVWKTLSGDPWIKTLQNPPKGNFKATIKEWEVEHASIMAGICSHQMTFDTFQNKANVCWAKSLVPILETAGIKLNDRQWSQIIQAFKEDKAYSPEVALNEICTRMYGVDLDSGLFSKPLVSVYYADNHWDNRPGGKMFGFNPEAASILERKYPFTKGKWNINKQICVTTRRIEDFNPTTNIIPANRRLPHSLVAEHRPVKGERMEWLVNKINGHHVLLVSGCSLALPTKRVTWVAPLGVRGADYTYNLELGLPATLGRYDLVVINIHTPFRIHHYQQCVDHAMKLQMLGGDSLRLLKPGGSLLIRAYGYADRTSERVICVLGRKFRSSRALKPPCVTSNTEMFFLFSNFDNGRRNFTTHVMNNQLNAAFVGQATRAGCAPSYRVKRMDIAKNDEECVVNAANPRGLPGDGVCKAVYKKWPESFKNSATPVGTAKTVMCGTYPVIHAVGPNFSNYSESEGDRELAAAYREVAKEVTRLGVNSVAIPLLSTGVYSGGKDRLTQSLNHLFTAMDSTDADVVIYCRDKEWEKKISEAIQMRTQVELLDEHISIDCDVVRVHPDSSLAGRKGYSTTEGALYSYLEGTRFHQTAVDMAEIYTMWPKQTEANEQVCLYALGESIESIRQKCPVDDADASSPPKTVPCLCRYAMTPERVTRLRMNHVTSIIVCSSFPLPKYKIEGVQKVKCSKVMLFDHNVPSRVSPREYRPSQESVQEASTTTSLTHSQFDLSVDGKILPVPSDLDADAPALEPALDDGAIHTLPSATGNLAAVSDWVMSTVPVAPPRRRRGRNLTVTCDEREGNITPMASVRFFRAELCPVVQETAETRDTAMSLQAPPSTATELSHPPISFGAPSETFPITFGDFNEGEIESLSSELLTFGDFLPGEVDDLTDSDWSTCSDTDDELRLDRAGGYIFSSDTGPGHLQQKSVRQSVLPVNTLEEVHEEKCYPPKLDEAKEQLLLKKLQESASMANRSRYQSRKVENMKATIIQRLKRGCRLYLMSETPKVPTYRTTYPAPVYSPPINVRLSNPESAVAACNEFLARNYPTVSSYQITDEYDAYLDMVDGSESCLDRATFNPSKLRSYPKQHAYHAPSIRSAVPSPFQNTLQNVLAAATKRNCNVTQMRELPTLDSAVFNVECFKKFACNQEYWEEFAASPIRITTENLTTYVTKLKGPKAAALFAKTHNLLPLQEVPMDRFTVDMKRDVKVTPGTKHTEERPKVQVIQAAEPLATAYLCGIHRELVRRLNAVLLPNVHTLFDMSAEDFDAIIAAHFKPGDTVLETDIASFDKSQDDSLALTALMLLEDLGVDHSLLDLIEAAFGEISSCHLPTGTRFKFGAMMKSGMFLTLFVNTLLNITIASRVLEDRLTKSACAAFIGDDNIIHGVVSDELMAARCATWMNMEVKIIDAVVSQKAPYFCGGFILHDIVTGTACRVADPLKRLFKLGKPLAAGDEQDEDRRRALADEVVRWQRTGLIDELEKAVYSRYEVQGISVVVMSMATFASSRSNFEKLRGPVVTLYGGPK</sequence>
<evidence type="ECO:0000250" key="1">
    <source>
        <dbReference type="UniProtKB" id="P03317"/>
    </source>
</evidence>
<evidence type="ECO:0000250" key="2">
    <source>
        <dbReference type="UniProtKB" id="P08411"/>
    </source>
</evidence>
<evidence type="ECO:0000250" key="3">
    <source>
        <dbReference type="UniProtKB" id="P27282"/>
    </source>
</evidence>
<evidence type="ECO:0000255" key="4">
    <source>
        <dbReference type="PROSITE-ProRule" id="PRU00490"/>
    </source>
</evidence>
<evidence type="ECO:0000255" key="5">
    <source>
        <dbReference type="PROSITE-ProRule" id="PRU00539"/>
    </source>
</evidence>
<evidence type="ECO:0000255" key="6">
    <source>
        <dbReference type="PROSITE-ProRule" id="PRU00853"/>
    </source>
</evidence>
<evidence type="ECO:0000255" key="7">
    <source>
        <dbReference type="PROSITE-ProRule" id="PRU00990"/>
    </source>
</evidence>
<evidence type="ECO:0000255" key="8">
    <source>
        <dbReference type="PROSITE-ProRule" id="PRU01079"/>
    </source>
</evidence>
<evidence type="ECO:0000256" key="9">
    <source>
        <dbReference type="SAM" id="MobiDB-lite"/>
    </source>
</evidence>
<evidence type="ECO:0000269" key="10">
    <source>
    </source>
</evidence>
<evidence type="ECO:0000269" key="11">
    <source>
    </source>
</evidence>
<evidence type="ECO:0000269" key="12">
    <source>
    </source>
</evidence>
<evidence type="ECO:0000269" key="13">
    <source>
    </source>
</evidence>
<evidence type="ECO:0000269" key="14">
    <source>
    </source>
</evidence>
<evidence type="ECO:0000269" key="15">
    <source>
    </source>
</evidence>
<evidence type="ECO:0000269" key="16">
    <source>
    </source>
</evidence>
<evidence type="ECO:0000269" key="17">
    <source>
    </source>
</evidence>
<evidence type="ECO:0000269" key="18">
    <source>
    </source>
</evidence>
<evidence type="ECO:0000269" key="19">
    <source>
    </source>
</evidence>
<evidence type="ECO:0000269" key="20">
    <source>
    </source>
</evidence>
<evidence type="ECO:0000269" key="21">
    <source>
    </source>
</evidence>
<evidence type="ECO:0000269" key="22">
    <source>
    </source>
</evidence>
<evidence type="ECO:0000269" key="23">
    <source>
    </source>
</evidence>
<evidence type="ECO:0000269" key="24">
    <source>
    </source>
</evidence>
<evidence type="ECO:0000269" key="25">
    <source>
    </source>
</evidence>
<evidence type="ECO:0000269" key="26">
    <source>
    </source>
</evidence>
<evidence type="ECO:0000269" key="27">
    <source>
    </source>
</evidence>
<evidence type="ECO:0000269" key="28">
    <source>
    </source>
</evidence>
<evidence type="ECO:0000269" key="29">
    <source>
    </source>
</evidence>
<evidence type="ECO:0000269" key="30">
    <source>
    </source>
</evidence>
<evidence type="ECO:0000269" key="31">
    <source>
    </source>
</evidence>
<evidence type="ECO:0000269" key="32">
    <source>
    </source>
</evidence>
<evidence type="ECO:0000269" key="33">
    <source>
    </source>
</evidence>
<evidence type="ECO:0000269" key="34">
    <source>
    </source>
</evidence>
<evidence type="ECO:0000269" key="35">
    <source>
    </source>
</evidence>
<evidence type="ECO:0000305" key="36"/>
<evidence type="ECO:0000305" key="37">
    <source>
    </source>
</evidence>
<evidence type="ECO:0000305" key="38">
    <source>
    </source>
</evidence>
<evidence type="ECO:0000305" key="39">
    <source>
    </source>
</evidence>
<evidence type="ECO:0000305" key="40">
    <source>
    </source>
</evidence>
<evidence type="ECO:0000305" key="41">
    <source>
    </source>
</evidence>
<evidence type="ECO:0007744" key="42">
    <source>
        <dbReference type="PDB" id="3GPG"/>
    </source>
</evidence>
<evidence type="ECO:0007744" key="43">
    <source>
        <dbReference type="PDB" id="3GPO"/>
    </source>
</evidence>
<evidence type="ECO:0007744" key="44">
    <source>
        <dbReference type="PDB" id="3GPQ"/>
    </source>
</evidence>
<evidence type="ECO:0007744" key="45">
    <source>
        <dbReference type="PDB" id="5I22"/>
    </source>
</evidence>
<evidence type="ECO:0007744" key="46">
    <source>
        <dbReference type="PDB" id="6Z0U"/>
    </source>
</evidence>
<evidence type="ECO:0007744" key="47">
    <source>
        <dbReference type="PDB" id="6Z0V"/>
    </source>
</evidence>
<evidence type="ECO:0007829" key="48">
    <source>
        <dbReference type="PDB" id="3TRK"/>
    </source>
</evidence>
<evidence type="ECO:0007829" key="49">
    <source>
        <dbReference type="PDB" id="7DOP"/>
    </source>
</evidence>
<evidence type="ECO:0007829" key="50">
    <source>
        <dbReference type="PDB" id="7FGG"/>
    </source>
</evidence>
<evidence type="ECO:0007829" key="51">
    <source>
        <dbReference type="PDB" id="7FGH"/>
    </source>
</evidence>
<evidence type="ECO:0007829" key="52">
    <source>
        <dbReference type="PDB" id="7H6X"/>
    </source>
</evidence>
<evidence type="ECO:0007829" key="53">
    <source>
        <dbReference type="PDB" id="7H6Z"/>
    </source>
</evidence>
<evidence type="ECO:0007829" key="54">
    <source>
        <dbReference type="PDB" id="8AOV"/>
    </source>
</evidence>
<evidence type="ECO:0007829" key="55">
    <source>
        <dbReference type="PDB" id="8AXV"/>
    </source>
</evidence>
<evidence type="ECO:0007829" key="56">
    <source>
        <dbReference type="PDB" id="8PHZ"/>
    </source>
</evidence>
<reference key="1">
    <citation type="journal article" date="2002" name="J. Gen. Virol.">
        <title>Complete nucleotide sequence of chikungunya virus and evidence for an internal polyadenylation site.</title>
        <authorList>
            <person name="Khan A.H."/>
            <person name="Morita K."/>
            <person name="Parquet Md Mdel C."/>
            <person name="Hasebe F."/>
            <person name="Mathenge E.G."/>
            <person name="Igarashi A."/>
        </authorList>
    </citation>
    <scope>NUCLEOTIDE SEQUENCE [GENOMIC RNA]</scope>
</reference>
<reference key="2">
    <citation type="journal article" date="2011" name="PLoS ONE">
        <title>NTPase and 5'-RNA triphosphatase activities of Chikungunya virus nsP2 protein.</title>
        <authorList>
            <person name="Karpe Y.A."/>
            <person name="Aher P.P."/>
            <person name="Lole K.S."/>
        </authorList>
    </citation>
    <scope>FUNCTION (PROTEASE NSP2)</scope>
    <scope>CATALYTIC ACTIVITY (PROTEASE NSP2)</scope>
    <scope>COFACTOR (PROTEASE NSP2)</scope>
    <scope>BIOPHYSICOCHEMICAL PROPERTIES (PROTEASE NSP2)</scope>
    <scope>MUTAGENESIS OF LYS-727 AND 787-ASP-GLU-788</scope>
    <source>
        <strain>Andhra Pradesh</strain>
    </source>
</reference>
<reference key="3">
    <citation type="journal article" date="2012" name="J. Virol.">
        <title>Evasion of the innate immune response: the Old World alphavirus nsP2 protein induces rapid degradation of Rpb1, a catalytic subunit of RNA polymerase II.</title>
        <authorList>
            <person name="Akhrymuk I."/>
            <person name="Kulemzin S.V."/>
            <person name="Frolova E.I."/>
        </authorList>
    </citation>
    <scope>FUNCTION (PROTEASE NSP2)</scope>
</reference>
<reference key="4">
    <citation type="journal article" date="2012" name="Virus Res.">
        <title>Mapping interactions of Chikungunya virus nonstructural proteins.</title>
        <authorList>
            <person name="Sreejith R."/>
            <person name="Rana J."/>
            <person name="Dudha N."/>
            <person name="Kumar K."/>
            <person name="Gabrani R."/>
            <person name="Sharma S.K."/>
            <person name="Gupta A."/>
            <person name="Vrati S."/>
            <person name="Chaudhary V.K."/>
            <person name="Gupta S."/>
        </authorList>
    </citation>
    <scope>INTERACTION WITH MRNA-CAPPING ENZYME NSP1 (NON-STRUCTURAL PROTEIN 3)</scope>
    <scope>INTERACTION WITH NON-STRUCTURAL PROTEIN 3 (INTERACTION WITH MRNA-CAPPING ENZYME NSP1)</scope>
    <scope>INTERACTION WITH MRNA-CAPPING ENZYME NSP1 (RNA-DIRECTED RNA POLYMERASE NSP4)</scope>
    <scope>INTERACTION WITH RNA-DIRECTED RNA POLYMERASE NSP4 (MRNA-CAPPING ENZYME NSP1)</scope>
    <scope>INTERACTION WITH RNA-DIRECTED RNA POLYMERASE NSP4 (NON-STRUCTURAL PROTEIN 2)</scope>
    <scope>INTERACTION WITH NON-STRUCTURAL PROTEIN 2 (RNA-DIRECTED RNA POLYMERASE NSP4)</scope>
    <scope>INTERACTION WITH MRNA-CAPPING ENZYME NSP1 (NON-STRUCTURAL PROTEIN 2)</scope>
    <scope>INTERACTION WITH NON-STRUCTURAL PROTEIN 2 (MRNA-CAPPING ENZYME NSP1)</scope>
</reference>
<reference key="5">
    <citation type="journal article" date="2014" name="J. Biol. Chem.">
        <title>Functional cross-talk between distant domains of chikungunya virus non-structural protein 2 is decisive for its RNA-modulating activity.</title>
        <authorList>
            <person name="Das P.K."/>
            <person name="Merits A."/>
            <person name="Lulla A."/>
        </authorList>
    </citation>
    <scope>DOMAIN (PROTEASE NSP2)</scope>
    <scope>CATALYTIC ACTIVITY (PROTEASE NSP2)</scope>
    <scope>COFACTOR (PROTEASE NSP2)</scope>
    <scope>BIOPHYSICOCHEMICAL PROPERTIES (PROTEASE NSP2)</scope>
    <scope>FUNCTION (PROTEASE NSP2)</scope>
</reference>
<reference key="6">
    <citation type="journal article" date="2014" name="J. Virol.">
        <title>The C-terminal repeat domains of nsP3 from the Old World alphaviruses bind directly to G3BP.</title>
        <authorList>
            <person name="Panas M.D."/>
            <person name="Ahola T."/>
            <person name="McInerney G.M."/>
        </authorList>
    </citation>
    <scope>DOMAIN (NON-STRUCTURAL PROTEIN 3)</scope>
    <scope>INTERACTION WITH HOST G3BP1 (NON-STRUCTURAL PROTEIN 3)</scope>
</reference>
<reference key="7">
    <citation type="journal article" date="2015" name="Sci. Rep.">
        <title>Chikungunya nsP2 protease is not a papain-like cysteine protease and the catalytic dyad cysteine is interchangeable with a proximal serine.</title>
        <authorList>
            <person name="Saisawang C."/>
            <person name="Saitornuang S."/>
            <person name="Sillapee P."/>
            <person name="Ubol S."/>
            <person name="Smith D.R."/>
            <person name="Ketterman A.J."/>
        </authorList>
    </citation>
    <scope>FUNCTION (PROTEASE NSP2)</scope>
    <scope>MUTAGENESIS OF CYS-1013; SER-1017 AND TRP-1084</scope>
    <scope>CATALYTIC ACTIVITY (PROTEASE NSP2)</scope>
</reference>
<reference key="8">
    <citation type="journal article" date="2015" name="J. Virol.">
        <title>Stress granule components G3BP1 and G3BP2 play a proviral role early in Chikungunya virus replication.</title>
        <authorList>
            <person name="Scholte F.E."/>
            <person name="Tas A."/>
            <person name="Albulescu I.C."/>
            <person name="Zusinaite E."/>
            <person name="Merits A."/>
            <person name="Snijder E.J."/>
            <person name="van Hemert M.J."/>
        </authorList>
    </citation>
    <scope>FUNCTION (NON-STRUCTURAL PROTEIN 3)</scope>
</reference>
<reference key="9">
    <citation type="journal article" date="2016" name="Open Biol.">
        <title>Combined structural, biochemical and cellular evidence demonstrates that both FGDF motifs in alphavirus nsP3 are required for efficient replication.</title>
        <authorList>
            <person name="Schulte T."/>
            <person name="Liu L."/>
            <person name="Panas M.D."/>
            <person name="Thaa B."/>
            <person name="Dickson N."/>
            <person name="Gotte B."/>
            <person name="Achour A."/>
            <person name="McInerney G.M."/>
        </authorList>
    </citation>
    <scope>INTERACTION WITH HOST G3BP1 (NON-STRUCTURAL PROTEIN 3)</scope>
    <scope>MUTAGENESIS OF PHE-1812 AND PHE-1830</scope>
    <scope>DOMAIN (NON-STRUCTURAL PROTEIN 3)</scope>
    <scope>FUNCTION (NON-STRUCTURAL PROTEIN 3)</scope>
</reference>
<reference key="10">
    <citation type="journal article" date="2016" name="Sci. Rep.">
        <title>Chikungunya virus infectivity, RNA replication and non-structural polyprotein processing depend on the nsP2 protease's active site cysteine residue.</title>
        <authorList>
            <person name="Rausalu K."/>
            <person name="Utt A."/>
            <person name="Quirin T."/>
            <person name="Varghese F.S."/>
            <person name="Zusinaite E."/>
            <person name="Das P.K."/>
            <person name="Ahola T."/>
            <person name="Merits A."/>
        </authorList>
    </citation>
    <scope>CATALYTIC ACTIVITY (PROTEASE NSP2)</scope>
    <scope>FUNCTION (PROTEASE NSP2)</scope>
    <scope>ACTIVE SITE (PROTEASE NSP2)</scope>
    <scope>PROTEOLYTIC CLEAVAGE (POLYPROTEIN P1234)</scope>
    <scope>FUNCTION (POLYPROTEIN P1234)</scope>
    <scope>MUTAGENESIS OF CYS-1013; TRP-1014 AND SER-1017</scope>
</reference>
<reference key="11">
    <citation type="journal article" date="2016" name="PLoS Pathog.">
        <title>New World and Old World Alphaviruses Have Evolved to Exploit Different Components of Stress Granules, FXR and G3BP Proteins, for Assembly of Viral Replication Complexes.</title>
        <authorList>
            <person name="Kim D.Y."/>
            <person name="Reynaud J.M."/>
            <person name="Rasalouskaya A."/>
            <person name="Akhrymuk I."/>
            <person name="Mobley J.A."/>
            <person name="Frolov I."/>
            <person name="Frolova E.I."/>
        </authorList>
    </citation>
    <scope>FUNCTION (NON-STRUCTURAL PROTEIN 3)</scope>
    <scope>INTERACTION WITH HOST G3BP1 (NON-STRUCTURAL PROTEIN 3)</scope>
    <scope>DOMAIN (NON-STRUCTURAL PROTEIN 3)</scope>
</reference>
<reference key="12">
    <citation type="journal article" date="2017" name="Proc. Natl. Acad. Sci. U.S.A.">
        <title>ADP-ribosylhydrolase activity of Chikungunya virus macrodomain is critical for virus replication and virulence.</title>
        <authorList>
            <person name="McPherson R.L."/>
            <person name="Abraham R."/>
            <person name="Sreekumar E."/>
            <person name="Ong S.E."/>
            <person name="Cheng S.J."/>
            <person name="Baxter V.K."/>
            <person name="Kistemaker H.A."/>
            <person name="Filippov D.V."/>
            <person name="Griffin D.E."/>
            <person name="Leung A.K."/>
        </authorList>
    </citation>
    <scope>FUNCTION (NON-STRUCTURAL PROTEIN 3)</scope>
    <scope>DOMAIN (NON-STRUCTURAL PROTEIN 3)</scope>
    <scope>CATALYTIC ACTIVITY (NON-STRUCTURAL PROTEIN 3)</scope>
</reference>
<reference key="13">
    <citation type="journal article" date="2017" name="Sci. Rep.">
        <title>The conserved macrodomains of the non-structural proteins of Chikungunya virus and other pathogenic positive strand RNA viruses function as mono-ADP-ribosylhydrolases.</title>
        <authorList>
            <person name="Eckei L."/>
            <person name="Krieg S."/>
            <person name="Buetepage M."/>
            <person name="Lehmann A."/>
            <person name="Gross A."/>
            <person name="Lippok B."/>
            <person name="Grimm A.R."/>
            <person name="Kuemmerer B.M."/>
            <person name="Rossetti G."/>
            <person name="Luescher B."/>
            <person name="Verheugd P."/>
        </authorList>
    </citation>
    <scope>FUNCTION (NON-STRUCTURAL PROTEIN 3)</scope>
    <scope>DOMAIN (NON-STRUCTURAL PROTEIN 3)</scope>
    <scope>MUTAGENESIS OF ASN-1357; VAL-1366 AND TYR-1447</scope>
    <scope>CATALYTIC ACTIVITY (NON-STRUCTURAL PROTEIN 3)</scope>
</reference>
<reference key="14">
    <citation type="journal article" date="2017" name="MBio">
        <title>Disruption of the Opal Stop Codon Attenuates Chikungunya Virus-Induced Arthritis and Pathology.</title>
        <authorList>
            <person name="Jones J.E."/>
            <person name="Long K.M."/>
            <person name="Whitmore A.C."/>
            <person name="Sanders W."/>
            <person name="Thurlow L.R."/>
            <person name="Brown J.A."/>
            <person name="Morrison C.R."/>
            <person name="Vincent H."/>
            <person name="Peck K.M."/>
            <person name="Browning C."/>
            <person name="Moorman N."/>
            <person name="Lim J.K."/>
            <person name="Heise M.T."/>
        </authorList>
    </citation>
    <scope>READTHROUGH</scope>
</reference>
<reference key="15">
    <citation type="journal article" date="2018" name="J. Virol.">
        <title>The methyltransferase-like domain of Chikungunya virus nsP2 inhibits the interferon response by promoting the nuclear export of STAT1.</title>
        <authorList>
            <person name="Goeertz G.P."/>
            <person name="McNally K.L."/>
            <person name="Robertson S.J."/>
            <person name="Best S.M."/>
            <person name="Pijlman G.P."/>
            <person name="Fros J.J."/>
        </authorList>
    </citation>
    <scope>FUNCTION (PROTEASE NSP2)</scope>
    <scope>DOMAIN (PROTEASE NSP2)</scope>
    <scope>MUTAGENESIS OF PRO-1253 AND 1184-LYS-ARG-1185</scope>
</reference>
<reference key="16">
    <citation type="journal article" date="2018" name="J. Virol.">
        <title>Fatty acid synthase promotes the palmitoylation of Chikungunya virus nsP1.</title>
        <authorList>
            <person name="Zhang N."/>
            <person name="Zhao H."/>
            <person name="Zhang L."/>
        </authorList>
    </citation>
    <scope>PALMITOYLATION AT CYS-417 (MRNA-CAPPING ENZYME NSP1)</scope>
    <scope>PALMITOYLATION AT CYS-419 (MRNA-CAPPING ENZYME NSP1)</scope>
    <scope>SUBCELLULAR LOCATION (MRNA-CAPPING ENZYME NSP1)</scope>
    <scope>MUTAGENESIS OF CYS-417 AND CYS-419</scope>
    <scope>FUNCTION (MRNA-CAPPING ENZYME NSP1)</scope>
</reference>
<reference key="17">
    <citation type="journal article" date="2018" name="J. Virol.">
        <title>Multiple Host Factors Interact with the Hypervariable Domain of Chikungunya Virus nsP3 and Determine Viral Replication in Cell-Specific Mode.</title>
        <authorList>
            <person name="Meshram C.D."/>
            <person name="Agback P."/>
            <person name="Shiliaev N."/>
            <person name="Urakova N."/>
            <person name="Mobley J.A."/>
            <person name="Agback T."/>
            <person name="Frolova E.I."/>
            <person name="Frolov I."/>
        </authorList>
    </citation>
    <scope>INTERACTION WITH HOST G3BP1 (NON-STRUCTURAL PROTEIN 3)</scope>
    <scope>INTERACTION WITH HOST G3BP2 (NON-STRUCTURAL PROTEIN 3)</scope>
    <scope>DOMAIN (NON-STRUCTURAL PROTEIN 3)</scope>
    <scope>INTERACTION WITH HOST NAP1L1 (NON-STRUCTURAL PROTEIN 3)</scope>
    <scope>INTERACTION WITH HOST NAP1L4 (NON-STRUCTURAL PROTEIN 3)</scope>
</reference>
<reference key="18">
    <citation type="journal article" date="2019" name="PLoS Pathog.">
        <title>Multiple roles of the non-structural protein 3 (nsP3) alphavirus unique domain (AUD) during Chikungunya virus genome replication and transcription.</title>
        <authorList>
            <person name="Gao Y."/>
            <person name="Goonawardane N."/>
            <person name="Ward J."/>
            <person name="Tuplin A."/>
            <person name="Harris M."/>
        </authorList>
    </citation>
    <scope>DOMAIN (NON-STRUCTURAL PROTEIN 3)</scope>
    <scope>MUTAGENESIS OF 1593-VAL-PRO-1594 AND 1595-CYS--CYS-1597</scope>
    <source>
        <strain>Isolate LR2006 OPY1</strain>
    </source>
</reference>
<reference key="19">
    <citation type="journal article" date="2019" name="Virology">
        <title>Structural characterization and biological function of bivalent binding of CD2AP to intrinsically disordered domain of chikungunya virus nsP3 protein.</title>
        <authorList>
            <person name="Agback P."/>
            <person name="Dominguez F."/>
            <person name="Pustovalova Y."/>
            <person name="Lukash T."/>
            <person name="Shiliaev N."/>
            <person name="Orekhov V.Y."/>
            <person name="Frolov I."/>
            <person name="Agback T."/>
            <person name="Frolova E.I."/>
        </authorList>
    </citation>
    <scope>INTERACTION WITH HOST CD2AP (NON-STRUCTURAL PROTEIN 3)</scope>
    <scope>DOMAIN (NON-STRUCTURAL PROTEIN 3)</scope>
    <scope>INTERACTION WITH HOST SH3KBP1 (NON-STRUCTURAL PROTEIN 3)</scope>
</reference>
<reference key="20">
    <citation type="journal article" date="2019" name="J. Virol.">
        <title>The Host DHX9 DExH-Box Helicase Is Recruited to Chikungunya Virus Replication Complexes for Optimal Genomic RNA Translation.</title>
        <authorList>
            <person name="Matkovic R."/>
            <person name="Bernard E."/>
            <person name="Fontanel S."/>
            <person name="Eldin P."/>
            <person name="Chazal N."/>
            <person name="Hassan Hersi D."/>
            <person name="Merits A."/>
            <person name="Peloponese J.M. Jr."/>
            <person name="Briant L."/>
        </authorList>
    </citation>
    <scope>INTERACTION WITH HOST DHX9 (NON-STRUCTURAL PROTEIN 3)</scope>
    <scope>DOMAIN (NON-STRUCTURAL PROTEIN 3)</scope>
</reference>
<reference key="21">
    <citation type="journal article" date="2019" name="Nature">
        <title>FHL1 is a major host factor for chikungunya virus infection.</title>
        <authorList>
            <person name="Meertens L."/>
            <person name="Hafirassou M.L."/>
            <person name="Couderc T."/>
            <person name="Bonnet-Madin L."/>
            <person name="Kril V."/>
            <person name="Kuemmerer B.M."/>
            <person name="Labeau A."/>
            <person name="Brugier A."/>
            <person name="Simon-Loriere E."/>
            <person name="Burlaud-Gaillard J."/>
            <person name="Doyen C."/>
            <person name="Pezzi L."/>
            <person name="Goupil T."/>
            <person name="Rafasse S."/>
            <person name="Vidalain P.O."/>
            <person name="Bertrand-Legout A."/>
            <person name="Gueneau L."/>
            <person name="Juntas-Morales R."/>
            <person name="Ben Yaou R."/>
            <person name="Bonne G."/>
            <person name="de Lamballerie X."/>
            <person name="Benkirane M."/>
            <person name="Roingeard P."/>
            <person name="Delaugerre C."/>
            <person name="Lecuit M."/>
            <person name="Amara A."/>
        </authorList>
    </citation>
    <scope>INTERACTION WITH HOST FHL1 (NON-STRUCTURAL PROTEIN 3)</scope>
    <source>
        <strain>Isolate CHIKV21</strain>
    </source>
</reference>
<reference key="22">
    <citation type="journal article" date="2020" name="J. Virol.">
        <title>Structural and Functional Characterization of Host FHL1 Protein Interaction with Hypervariable Domain of Chikungunya Virus nsP3 Protein.</title>
        <authorList>
            <person name="Lukash T."/>
            <person name="Agback T."/>
            <person name="Dominguez F."/>
            <person name="Shiliaev N."/>
            <person name="Meshram C."/>
            <person name="Frolova E.I."/>
            <person name="Agback P."/>
            <person name="Frolov I."/>
        </authorList>
    </citation>
    <scope>INTERACTION WITH HOST FHL1 (NON-STRUCTURAL PROTEIN 3)</scope>
</reference>
<reference key="23">
    <citation type="journal article" date="2020" name="PLoS Pathog.">
        <title>Chikungunya virus antagonizes cGAS-STING mediated type-I interferon responses by degrading cGAS.</title>
        <authorList>
            <person name="Webb L.G."/>
            <person name="Veloz J."/>
            <person name="Pintado-Silva J."/>
            <person name="Zhu T."/>
            <person name="Rangel M.V."/>
            <person name="Mutetwa T."/>
            <person name="Zhang L."/>
            <person name="Bernal-Rubio D."/>
            <person name="Figueroa D."/>
            <person name="Carrau L."/>
            <person name="Fenutria R."/>
            <person name="Potla U."/>
            <person name="Reid S.P."/>
            <person name="Yount J.S."/>
            <person name="Stapleford K.A."/>
            <person name="Aguirre S."/>
            <person name="Fernandez-Sesma A."/>
        </authorList>
    </citation>
    <scope>INTERACTION WITH HOST STING1 (NON-STRUCTURAL PROTEIN 1)</scope>
</reference>
<reference key="24">
    <citation type="journal article" date="2022" name="J. Virol.">
        <title>TMEMu45B Interacts with Sindbis Virus Nsp1 and Nsp4 and Inhibits Viral Replication.</title>
        <authorList>
            <person name="Yan F."/>
            <person name="Yang W."/>
            <person name="Wang X."/>
            <person name="Gao G."/>
        </authorList>
    </citation>
    <scope>INTERACTION WITH HOST TMEM45B (NON-STRUCTURAL PROTEIN 1)</scope>
    <scope>INTERACTION WITH HOST TMEM45B (NON-STRUCTURAL PROTEIN 4)</scope>
</reference>
<reference evidence="42 43 44" key="25">
    <citation type="journal article" date="2009" name="J. Virol.">
        <title>The crystal structures of Chikungunya and Venezuelan equine encephalitis virus nsP3 macro domains define a conserved adenosine binding pocket.</title>
        <authorList>
            <person name="Malet H."/>
            <person name="Coutard B."/>
            <person name="Jamal S."/>
            <person name="Dutartre H."/>
            <person name="Papageorgiou N."/>
            <person name="Neuvonen M."/>
            <person name="Ahola T."/>
            <person name="Forrester N."/>
            <person name="Gould E.A."/>
            <person name="Lafitte D."/>
            <person name="Ferron F."/>
            <person name="Lescar J."/>
            <person name="Gorbalenya A.E."/>
            <person name="de Lamballerie X."/>
            <person name="Canard B."/>
        </authorList>
    </citation>
    <scope>X-RAY CRYSTALLOGRAPHY (1.65 ANGSTROMS) OF 1334-1493 IN COMPLEX WITH ADP-RIBOSE</scope>
    <scope>MUTAGENESIS OF ASP-1343; ASN-1357 AND TYR-1447</scope>
    <scope>CATALYTIC ACTIVITY (NON-STRUCTURAL PROTEIN 3)</scope>
</reference>
<reference evidence="45" key="26">
    <citation type="journal article" date="2016" name="J. Biol. Chem.">
        <title>Structural Basis of the High Affinity Interaction between the Alphavirus Nonstructural Protein-3 (nsP3) and the SH3 Domain of Amphiphysin-2.</title>
        <authorList>
            <person name="Tossavainen H."/>
            <person name="Aitio O."/>
            <person name="Hellman M."/>
            <person name="Saksela K."/>
            <person name="Permi P."/>
        </authorList>
    </citation>
    <scope>STRUCTURE BY NMR OF 1728-1744</scope>
</reference>
<reference evidence="46 47" key="27">
    <citation type="journal article" date="2021" name="Nature">
        <title>Capping pores of alphavirus nsP1 gate membranous viral replication factories.</title>
        <authorList>
            <person name="Jones R."/>
            <person name="Bragagnolo G."/>
            <person name="Arranz R."/>
            <person name="Reguera J."/>
        </authorList>
    </citation>
    <scope>STRUCTURE BY ELECTRON MICROSCOPY (2.60 ANGSTROMS) OF 1-472</scope>
    <scope>SUBUNIT (NON-STRUCTURAL PROTEIN 1)</scope>
</reference>
<reference key="28">
    <citation type="journal article" date="2021" name="Cell Host Microbe">
        <title>Structural insights into viral RNA capping and plasma membrane targeting by Chikungunya virus nonstructural protein 1.</title>
        <authorList>
            <person name="Zhang K."/>
            <person name="Law Y.S."/>
            <person name="Law M.C.Y."/>
            <person name="Tan Y.B."/>
            <person name="Wirawan M."/>
            <person name="Luo D."/>
        </authorList>
    </citation>
    <scope>X-RAY CRYSTALLOGRAPHY (2.38 ANGSTROMS) OF 1-516 IN COMPLEX WITH ZINC</scope>
    <scope>SUBUNIT (NON-STRUCTURAL PROTEIN 1)</scope>
    <scope>ACTIVE SITE (NON-STRUCTURAL PROTEIN 1)</scope>
    <scope>FUNCTION (NON-STRUCTURAL PROTEIN 1)</scope>
</reference>
<name>POLN_CHIKS</name>